<name>CD209_HUMAN</name>
<accession>Q9NNX6</accession>
<accession>A8KAM4</accession>
<accession>A8MVQ9</accession>
<accession>G5E9C4</accession>
<accession>Q2TB19</accession>
<accession>Q96QP7</accession>
<accession>Q96QP8</accession>
<accession>Q96QP9</accession>
<accession>Q96QQ0</accession>
<accession>Q96QQ1</accession>
<accession>Q96QQ2</accession>
<accession>Q96QQ3</accession>
<accession>Q96QQ4</accession>
<accession>Q96QQ5</accession>
<accession>Q96QQ6</accession>
<accession>Q96QQ7</accession>
<accession>Q96QQ8</accession>
<evidence type="ECO:0000255" key="1"/>
<evidence type="ECO:0000255" key="2">
    <source>
        <dbReference type="PROSITE-ProRule" id="PRU00040"/>
    </source>
</evidence>
<evidence type="ECO:0000269" key="3">
    <source>
    </source>
</evidence>
<evidence type="ECO:0000269" key="4">
    <source>
    </source>
</evidence>
<evidence type="ECO:0000269" key="5">
    <source>
    </source>
</evidence>
<evidence type="ECO:0000269" key="6">
    <source>
    </source>
</evidence>
<evidence type="ECO:0000269" key="7">
    <source>
    </source>
</evidence>
<evidence type="ECO:0000269" key="8">
    <source>
    </source>
</evidence>
<evidence type="ECO:0000269" key="9">
    <source>
    </source>
</evidence>
<evidence type="ECO:0000269" key="10">
    <source>
    </source>
</evidence>
<evidence type="ECO:0000269" key="11">
    <source>
    </source>
</evidence>
<evidence type="ECO:0000269" key="12">
    <source>
    </source>
</evidence>
<evidence type="ECO:0000269" key="13">
    <source>
    </source>
</evidence>
<evidence type="ECO:0000269" key="14">
    <source>
    </source>
</evidence>
<evidence type="ECO:0000269" key="15">
    <source>
    </source>
</evidence>
<evidence type="ECO:0000269" key="16">
    <source>
    </source>
</evidence>
<evidence type="ECO:0000269" key="17">
    <source>
    </source>
</evidence>
<evidence type="ECO:0000269" key="18">
    <source>
    </source>
</evidence>
<evidence type="ECO:0000269" key="19">
    <source>
    </source>
</evidence>
<evidence type="ECO:0000269" key="20">
    <source>
    </source>
</evidence>
<evidence type="ECO:0000269" key="21">
    <source>
    </source>
</evidence>
<evidence type="ECO:0000269" key="22">
    <source>
    </source>
</evidence>
<evidence type="ECO:0000269" key="23">
    <source>
    </source>
</evidence>
<evidence type="ECO:0000269" key="24">
    <source>
    </source>
</evidence>
<evidence type="ECO:0000269" key="25">
    <source>
    </source>
</evidence>
<evidence type="ECO:0000269" key="26">
    <source>
    </source>
</evidence>
<evidence type="ECO:0000269" key="27">
    <source>
    </source>
</evidence>
<evidence type="ECO:0000269" key="28">
    <source>
    </source>
</evidence>
<evidence type="ECO:0000269" key="29">
    <source>
    </source>
</evidence>
<evidence type="ECO:0000269" key="30">
    <source>
    </source>
</evidence>
<evidence type="ECO:0000269" key="31">
    <source>
    </source>
</evidence>
<evidence type="ECO:0000269" key="32">
    <source>
    </source>
</evidence>
<evidence type="ECO:0000269" key="33">
    <source>
    </source>
</evidence>
<evidence type="ECO:0000269" key="34">
    <source>
    </source>
</evidence>
<evidence type="ECO:0000303" key="35">
    <source>
    </source>
</evidence>
<evidence type="ECO:0000303" key="36">
    <source>
    </source>
</evidence>
<evidence type="ECO:0000305" key="37"/>
<evidence type="ECO:0000305" key="38">
    <source>
    </source>
</evidence>
<evidence type="ECO:0007829" key="39">
    <source>
        <dbReference type="PDB" id="2XR6"/>
    </source>
</evidence>
<keyword id="KW-0002">3D-structure</keyword>
<keyword id="KW-1064">Adaptive immunity</keyword>
<keyword id="KW-0025">Alternative splicing</keyword>
<keyword id="KW-0106">Calcium</keyword>
<keyword id="KW-0130">Cell adhesion</keyword>
<keyword id="KW-1003">Cell membrane</keyword>
<keyword id="KW-1015">Disulfide bond</keyword>
<keyword id="KW-0254">Endocytosis</keyword>
<keyword id="KW-0325">Glycoprotein</keyword>
<keyword id="KW-1183">Host cell receptor for virus entry</keyword>
<keyword id="KW-0945">Host-virus interaction</keyword>
<keyword id="KW-0391">Immunity</keyword>
<keyword id="KW-0399">Innate immunity</keyword>
<keyword id="KW-0430">Lectin</keyword>
<keyword id="KW-0465">Mannose-binding</keyword>
<keyword id="KW-0472">Membrane</keyword>
<keyword id="KW-0479">Metal-binding</keyword>
<keyword id="KW-1267">Proteomics identification</keyword>
<keyword id="KW-0675">Receptor</keyword>
<keyword id="KW-1185">Reference proteome</keyword>
<keyword id="KW-0677">Repeat</keyword>
<keyword id="KW-0964">Secreted</keyword>
<keyword id="KW-0735">Signal-anchor</keyword>
<keyword id="KW-0812">Transmembrane</keyword>
<keyword id="KW-1133">Transmembrane helix</keyword>
<comment type="function">
    <text evidence="10">Pathogen-recognition receptor expressed on the surface of immature dendritic cells (DCs) and involved in initiation of primary immune response. Thought to mediate the endocytosis of pathogens which are subsequently degraded in lysosomal compartments. The receptor returns to the cell membrane surface and the pathogen-derived antigens are presented to resting T-cells via MHC class II proteins to initiate the adaptive immune response.</text>
</comment>
<comment type="function">
    <text evidence="3 4 14">On DCs it is a high affinity receptor for ICAM2 and ICAM3 by binding to mannose-like carbohydrates. May act as a DC rolling receptor that mediates transendothelial migration of DC presursors from blood to tissues by binding endothelial ICAM2. Seems to regulate DC-induced T-cell proliferation by binding to ICAM3 on T-cells in the immunological synapse formed between DC and T-cells.</text>
</comment>
<comment type="function">
    <text evidence="9 12 17">(Microbial infection) Acts as an attachment receptor for HIV-1 and HIV-2.</text>
</comment>
<comment type="function">
    <text evidence="12 13">(Microbial infection) Acts as an attachment receptor for Ebolavirus.</text>
</comment>
<comment type="function">
    <text evidence="11 31">(Microbial infection) Acts as an attachment receptor for Cytomegalovirus.</text>
</comment>
<comment type="function">
    <text evidence="18 25">(Microbial infection) Acts as an attachment receptor for HCV.</text>
</comment>
<comment type="function">
    <text evidence="15">(Microbial infection) Acts as an attachment receptor for Dengue virus.</text>
</comment>
<comment type="function">
    <text evidence="24">(Microbial infection) Acts as an attachment receptor for Measles virus.</text>
</comment>
<comment type="function">
    <text evidence="26">(Microbial infection) Acts as an attachment receptor for Herpes simplex virus 1.</text>
</comment>
<comment type="function">
    <text evidence="27">(Microbial infection) Acts as an attachment receptor for Influenzavirus A.</text>
</comment>
<comment type="function">
    <text evidence="16">(Microbial infection) Acts as an attachment receptor for SARS-CoV.</text>
</comment>
<comment type="function">
    <text evidence="34">(Microbial infection) Acts as an attachment receptor for Japanese encephalitis virus.</text>
</comment>
<comment type="function">
    <text evidence="19">(Microbial infection) Acts as an attachment receptor for Lassa virus (PubMed:23966408). Acts as an attachment receptor for Marburg virusn.</text>
</comment>
<comment type="function">
    <text evidence="30">(Microbial infection) Acts as an attachment receptor for Respiratory syncytial virus.</text>
</comment>
<comment type="function">
    <text evidence="29">(Microbial infection) Acts as an attachment receptor for Rift valley fever virus and uukuniemi virus.</text>
</comment>
<comment type="function">
    <text evidence="23">(Microbial infection) Acts as an attachment receptor for West-nile virus.</text>
</comment>
<comment type="function">
    <text evidence="20 22 28">(Microbial infection) Probably recognizes in a calcium-dependent manner high mannose N-linked oligosaccharides in a variety of bacterial pathogen antigens, including Leishmania pifanoi LPG, Lewis-x antigen in Helicobacter pylori LPS, mannose in Klebsiella pneumonae LPS, di-mannose and tri-mannose in Mycobacterium tuberculosis ManLAM and Lewis-x antigen in Schistosoma mansoni SEA (PubMed:16379498). Recognition of M.tuberculosis by dendritic cells occurs partially via this molecule (PubMed:16092920, PubMed:21203928).</text>
</comment>
<comment type="subunit">
    <text evidence="3 4 7 8 21 32">Homotetramer. Interacts with C1QBP; the interaction is indicative for a C1q:C1QBP:CD209 signaling complex. Interacts with ICAM2 and ICAM3 by binding to mannose-like carbohydrates. Interacts (via C-type lectin domain) with CEACAM1 (via Lewis X moieties); this interaction is regulated by the glycosylation pattern of CEACAM1 on cell types and regulates contact between dendritic cells and neutrophils (PubMed:16246332).</text>
</comment>
<comment type="subunit">
    <text evidence="9 12 17">(Microbial infection) Interacts with HIV-1 and HIV-2 gp120 (PubMed:11799126, PubMed:12502850, PubMed:1518869).</text>
</comment>
<comment type="subunit">
    <text evidence="12 13">(Microbial infection) Interacts with ebolavirus envelope glycoproteins (PubMed:12502850, PubMed:12504546).</text>
</comment>
<comment type="subunit">
    <text evidence="11 31">(Microbial infection) Interacts with cytomegalovirus gB protein (PubMed:12433371, PubMed:22496863).</text>
</comment>
<comment type="subunit">
    <text evidence="18 25">(Microbial infection) Interacts with HCV E2 protein (PubMed:15371595, PubMed:16816373).</text>
</comment>
<comment type="subunit">
    <text evidence="15">(Microbial infection) Interacts with dengue virus major envelope protein E.</text>
</comment>
<comment type="subunit">
    <text evidence="24">(Microbial infection) Interacts with measles hemagglutinin.</text>
</comment>
<comment type="subunit">
    <text evidence="26">(Microbial infection) Interacts with herpes simplex virus 1 surface proteins.</text>
</comment>
<comment type="subunit">
    <text evidence="27">(Microbial infection) Interacts with Influenzavirus A hemagglutinin.</text>
</comment>
<comment type="subunit">
    <text evidence="16">(Microbial infection) Interacts with SARS-CoV spike glycoprotein.</text>
</comment>
<comment type="subunit">
    <text evidence="34">(Microbial infection) Interacts with Japanese encephalitis virus E protein.</text>
</comment>
<comment type="subunit">
    <text evidence="33">(Microbial infection) Interacts with Lassa virus Glycoprotein.</text>
</comment>
<comment type="subunit">
    <text evidence="19">(Microbial infection) Interacts with marburg virus glycoprotein.</text>
</comment>
<comment type="subunit">
    <text evidence="30">(Microbial infection) Interacts with Respiratory syncytial virus glycoprotein G.</text>
</comment>
<comment type="subunit">
    <text evidence="29">(Microbial infection) Interacts with Rift valley fever virus and uukuniemi virus envelope glycoprotein.</text>
</comment>
<comment type="subunit">
    <text evidence="23">(Microbial infection) Interacts with west-nile virus envelope glycoprotein.</text>
</comment>
<comment type="subunit">
    <text evidence="28">(Microbial infection) Interacts with whole M.bovis cells in a Ca(2+)-dependent and independent manner; in vitro experiments suggest it interacts with CH60.1 (groL1), DnaK, GADPH (gap) and LrpG (PubMed:21203928).</text>
</comment>
<comment type="interaction">
    <interactant intactId="EBI-9257341">
        <id>Q9NNX6</id>
    </interactant>
    <interactant intactId="EBI-2107455">
        <id>Q08AM6</id>
        <label>VAC14</label>
    </interactant>
    <organismsDiffer>false</organismsDiffer>
    <experiments>4</experiments>
</comment>
<comment type="interaction">
    <interactant intactId="EBI-9257341">
        <id>Q9NNX6</id>
    </interactant>
    <interactant intactId="EBI-25474821">
        <id>P0DTC2</id>
        <label>S</label>
    </interactant>
    <organismsDiffer>true</organismsDiffer>
    <experiments>11</experiments>
</comment>
<comment type="interaction">
    <interactant intactId="EBI-9257341">
        <id>Q9NNX6</id>
    </interactant>
    <interactant intactId="EBI-9257330">
        <id>PRO_0000278734</id>
        <dbReference type="UniProtKB" id="Q03463"/>
    </interactant>
    <organismsDiffer>true</organismsDiffer>
    <experiments>2</experiments>
</comment>
<comment type="interaction">
    <interactant intactId="EBI-12300031">
        <id>Q9NNX6-10</id>
    </interactant>
    <interactant intactId="EBI-11954292">
        <id>Q86V38</id>
        <label>ATN1</label>
    </interactant>
    <organismsDiffer>false</organismsDiffer>
    <experiments>3</experiments>
</comment>
<comment type="interaction">
    <interactant intactId="EBI-12300031">
        <id>Q9NNX6-10</id>
    </interactant>
    <interactant intactId="EBI-718729">
        <id>P55212</id>
        <label>CASP6</label>
    </interactant>
    <organismsDiffer>false</organismsDiffer>
    <experiments>3</experiments>
</comment>
<comment type="interaction">
    <interactant intactId="EBI-12300031">
        <id>Q9NNX6-10</id>
    </interactant>
    <interactant intactId="EBI-6875961">
        <id>P02489</id>
        <label>CRYAA</label>
    </interactant>
    <organismsDiffer>false</organismsDiffer>
    <experiments>3</experiments>
</comment>
<comment type="interaction">
    <interactant intactId="EBI-12300031">
        <id>Q9NNX6-10</id>
    </interactant>
    <interactant intactId="EBI-12593112">
        <id>O75190-2</id>
        <label>DNAJB6</label>
    </interactant>
    <organismsDiffer>false</organismsDiffer>
    <experiments>3</experiments>
</comment>
<comment type="interaction">
    <interactant intactId="EBI-12300031">
        <id>Q9NNX6-10</id>
    </interactant>
    <interactant intactId="EBI-395638">
        <id>O14645</id>
        <label>DNALI1</label>
    </interactant>
    <organismsDiffer>false</organismsDiffer>
    <experiments>3</experiments>
</comment>
<comment type="interaction">
    <interactant intactId="EBI-12300031">
        <id>Q9NNX6-10</id>
    </interactant>
    <interactant intactId="EBI-25852368">
        <id>O75460-2</id>
        <label>ERN1</label>
    </interactant>
    <organismsDiffer>false</organismsDiffer>
    <experiments>3</experiments>
</comment>
<comment type="interaction">
    <interactant intactId="EBI-12300031">
        <id>Q9NNX6-10</id>
    </interactant>
    <interactant intactId="EBI-10226858">
        <id>Q0VDC6</id>
        <label>FKBP1A</label>
    </interactant>
    <organismsDiffer>false</organismsDiffer>
    <experiments>3</experiments>
</comment>
<comment type="interaction">
    <interactant intactId="EBI-12300031">
        <id>Q9NNX6-10</id>
    </interactant>
    <interactant intactId="EBI-356991">
        <id>P54652</id>
        <label>HSPA2</label>
    </interactant>
    <organismsDiffer>false</organismsDiffer>
    <experiments>3</experiments>
</comment>
<comment type="interaction">
    <interactant intactId="EBI-12300031">
        <id>Q9NNX6-10</id>
    </interactant>
    <interactant intactId="EBI-9091197">
        <id>Q8IY31-3</id>
        <label>IFT20</label>
    </interactant>
    <organismsDiffer>false</organismsDiffer>
    <experiments>3</experiments>
</comment>
<comment type="interaction">
    <interactant intactId="EBI-12300031">
        <id>Q9NNX6-10</id>
    </interactant>
    <interactant intactId="EBI-948266">
        <id>O14901</id>
        <label>KLF11</label>
    </interactant>
    <organismsDiffer>false</organismsDiffer>
    <experiments>3</experiments>
</comment>
<comment type="interaction">
    <interactant intactId="EBI-12300031">
        <id>Q9NNX6-10</id>
    </interactant>
    <interactant intactId="EBI-21591415">
        <id>P13473-2</id>
        <label>LAMP2</label>
    </interactant>
    <organismsDiffer>false</organismsDiffer>
    <experiments>3</experiments>
</comment>
<comment type="interaction">
    <interactant intactId="EBI-12300031">
        <id>Q9NNX6-10</id>
    </interactant>
    <interactant intactId="EBI-2811583">
        <id>Q9BVL2</id>
        <label>NUP58</label>
    </interactant>
    <organismsDiffer>false</organismsDiffer>
    <experiments>3</experiments>
</comment>
<comment type="interaction">
    <interactant intactId="EBI-12300031">
        <id>Q9NNX6-10</id>
    </interactant>
    <interactant intactId="EBI-50433196">
        <id>A0A6Q8PF08</id>
        <label>PMP22</label>
    </interactant>
    <organismsDiffer>false</organismsDiffer>
    <experiments>3</experiments>
</comment>
<comment type="interaction">
    <interactant intactId="EBI-12300031">
        <id>Q9NNX6-10</id>
    </interactant>
    <interactant intactId="EBI-5280197">
        <id>O75400-2</id>
        <label>PRPF40A</label>
    </interactant>
    <organismsDiffer>false</organismsDiffer>
    <experiments>3</experiments>
</comment>
<comment type="interaction">
    <interactant intactId="EBI-12300031">
        <id>Q9NNX6-10</id>
    </interactant>
    <interactant intactId="EBI-286642">
        <id>P62826</id>
        <label>RAN</label>
    </interactant>
    <organismsDiffer>false</organismsDiffer>
    <experiments>3</experiments>
</comment>
<comment type="interaction">
    <interactant intactId="EBI-12300031">
        <id>Q9NNX6-10</id>
    </interactant>
    <interactant intactId="EBI-357285">
        <id>P50502</id>
        <label>ST13</label>
    </interactant>
    <organismsDiffer>false</organismsDiffer>
    <experiments>3</experiments>
</comment>
<comment type="interaction">
    <interactant intactId="EBI-12300031">
        <id>Q9NNX6-10</id>
    </interactant>
    <interactant intactId="EBI-2116184">
        <id>Q8IYN2</id>
        <label>TCEAL8</label>
    </interactant>
    <organismsDiffer>false</organismsDiffer>
    <experiments>3</experiments>
</comment>
<comment type="interaction">
    <interactant intactId="EBI-12300031">
        <id>Q9NNX6-10</id>
    </interactant>
    <interactant intactId="EBI-2107455">
        <id>Q08AM6</id>
        <label>VAC14</label>
    </interactant>
    <organismsDiffer>false</organismsDiffer>
    <experiments>3</experiments>
</comment>
<comment type="subcellular location">
    <molecule>Isoform 1</molecule>
    <subcellularLocation>
        <location evidence="37">Cell membrane</location>
        <topology evidence="37">Single-pass type II membrane protein</topology>
    </subcellularLocation>
</comment>
<comment type="subcellular location">
    <molecule>Isoform 2</molecule>
    <subcellularLocation>
        <location evidence="37">Cell membrane</location>
        <topology evidence="37">Single-pass type II membrane protein</topology>
    </subcellularLocation>
</comment>
<comment type="subcellular location">
    <molecule>Isoform 3</molecule>
    <subcellularLocation>
        <location evidence="37">Cell membrane</location>
        <topology evidence="37">Single-pass type II membrane protein</topology>
    </subcellularLocation>
</comment>
<comment type="subcellular location">
    <molecule>Isoform 4</molecule>
    <subcellularLocation>
        <location evidence="37">Cell membrane</location>
        <topology evidence="37">Single-pass type II membrane protein</topology>
    </subcellularLocation>
</comment>
<comment type="subcellular location">
    <molecule>Isoform 5</molecule>
    <subcellularLocation>
        <location evidence="37">Cell membrane</location>
        <topology evidence="37">Single-pass type II membrane protein</topology>
    </subcellularLocation>
</comment>
<comment type="subcellular location">
    <molecule>Isoform 6</molecule>
    <subcellularLocation>
        <location evidence="37">Secreted</location>
    </subcellularLocation>
</comment>
<comment type="subcellular location">
    <molecule>Isoform 7</molecule>
    <subcellularLocation>
        <location evidence="37">Secreted</location>
    </subcellularLocation>
</comment>
<comment type="subcellular location">
    <molecule>Isoform 8</molecule>
    <subcellularLocation>
        <location evidence="37">Secreted</location>
    </subcellularLocation>
</comment>
<comment type="subcellular location">
    <molecule>Isoform 9</molecule>
    <subcellularLocation>
        <location evidence="37">Secreted</location>
    </subcellularLocation>
</comment>
<comment type="subcellular location">
    <molecule>Isoform 10</molecule>
    <subcellularLocation>
        <location evidence="37">Secreted</location>
    </subcellularLocation>
</comment>
<comment type="subcellular location">
    <molecule>Isoform 11</molecule>
    <subcellularLocation>
        <location evidence="37">Secreted</location>
    </subcellularLocation>
</comment>
<comment type="subcellular location">
    <molecule>Isoform 12</molecule>
    <subcellularLocation>
        <location evidence="37">Secreted</location>
    </subcellularLocation>
</comment>
<comment type="alternative products">
    <event type="alternative splicing"/>
    <isoform>
        <id>Q9NNX6-1</id>
        <name>1</name>
        <name>mDC-SIGN1A type I</name>
        <sequence type="displayed"/>
    </isoform>
    <isoform>
        <id>Q9NNX6-2</id>
        <name>2</name>
        <name>mDC-SIGN1A type II</name>
        <sequence type="described" ref="VSP_010049"/>
    </isoform>
    <isoform>
        <id>Q9NNX6-3</id>
        <name>3</name>
        <name>mDC-SIGN1A type III</name>
        <sequence type="described" ref="VSP_010044"/>
    </isoform>
    <isoform>
        <id>Q9NNX6-4</id>
        <name>4</name>
        <name>mDC-SIGN1A type IV</name>
        <sequence type="described" ref="VSP_010042"/>
    </isoform>
    <isoform>
        <id>Q9NNX6-5</id>
        <name>5</name>
        <name>mDC-SIGN1B type I</name>
        <sequence type="described" ref="VSP_010037"/>
    </isoform>
    <isoform>
        <id>Q9NNX6-6</id>
        <name>6</name>
        <name>sDC-SIGN1A type I</name>
        <sequence type="described" ref="VSP_010041"/>
    </isoform>
    <isoform>
        <id>Q9NNX6-7</id>
        <name>7</name>
        <name>sDC-SIGN1A type II</name>
        <sequence type="described" ref="VSP_010038"/>
    </isoform>
    <isoform>
        <id>Q9NNX6-8</id>
        <name>8</name>
        <name>sDC-SIGN1A type III</name>
        <sequence type="described" ref="VSP_010038 VSP_010043"/>
    </isoform>
    <isoform>
        <id>Q9NNX6-9</id>
        <name>9</name>
        <name>sDC-SIGN1A type IV</name>
        <sequence type="described" ref="VSP_010039 VSP_010040"/>
    </isoform>
    <isoform>
        <id>Q9NNX6-10</id>
        <name>10</name>
        <name>sDC-SIGN1B type I</name>
        <sequence type="described" ref="VSP_010037 VSP_010041"/>
    </isoform>
    <isoform>
        <id>Q9NNX6-11</id>
        <name>11</name>
        <name>sDC-SIGN1B type II</name>
        <sequence type="described" ref="VSP_010037 VSP_010041 VSP_010047"/>
    </isoform>
    <isoform>
        <id>Q9NNX6-12</id>
        <name>12</name>
        <name>sDC-SIGN1B type III</name>
        <sequence type="described" ref="VSP_010037 VSP_010041 VSP_010048 VSP_010050"/>
    </isoform>
    <text evidence="6">Additional isoforms seem to exist. Several splicing events may be used independently in a modular way. Deletion of the transmembrane domain encoding exon through alternative splicing produces soluble isoforms.</text>
</comment>
<comment type="tissue specificity">
    <text evidence="5 6">Predominantly expressed in dendritic cells and in DC-residing tissues. Also found in placental macrophages, endothelial cells of placental vascular channels, peripheral blood mononuclear cells, and THP-1 monocytes.</text>
</comment>
<comment type="domain">
    <text>The tandem repeat domain, also called neck domain, mediates oligomerization.</text>
</comment>
<comment type="polymorphism">
    <text evidence="38">Genetic variations in the CD209 promoter determine M.tuberculosis susceptibility [MIM:607948] (PubMed:16379498).</text>
</comment>
<comment type="polymorphism">
    <text>Genetic variations in CD209 may influence susceptibility or resistance to dengue virus infection, as well as disease progression and severity [MIM:614371]. A promoter polymorphism in the CD209 gene is associated with protection from dengue fever, but not dengue hemorrhagic fever.</text>
</comment>
<comment type="miscellaneous">
    <text>In vitro, is a receptor for HIV-1 and transmits HIV-1 either in trans without DC infection, or in cis following a DC infection to permissive T-cells to induce a robust infection. Bound HIV-1 remains infectious over a prolonged period of time and it is proposed that bound HIV-1 is not degraded but protected in non-lysosomal acidic organelles within the DCs close to the cell membrane thus contributing to the HIV-1 infectious potential during transport by DCs from the periphery to lymphoid organs.</text>
</comment>
<comment type="miscellaneous">
    <molecule>Isoform 9</molecule>
    <text evidence="37">May be produced at very low levels due to a premature stop codon in the mRNA, leading to nonsense-mediated mRNA decay.</text>
</comment>
<comment type="sequence caution" evidence="37">
    <conflict type="miscellaneous discrepancy">
        <sequence resource="EMBL-CDS" id="AAK91858"/>
    </conflict>
    <text>Aberrant splicing.</text>
</comment>
<comment type="online information" name="Wikipedia">
    <link uri="https://en.wikipedia.org/wiki/DC-SIGN"/>
    <text>DC-SIGN entry</text>
</comment>
<comment type="online information" name="Functional Glycomics Gateway - Glycan Binding">
    <link uri="http://www.functionalglycomics.org/glycomics/GBPServlet?&amp;operationType=view&amp;cbpId=cbp_hum_Ctlect_00121"/>
    <text>DC-SIGN</text>
</comment>
<proteinExistence type="evidence at protein level"/>
<protein>
    <recommendedName>
        <fullName>CD209 antigen</fullName>
    </recommendedName>
    <alternativeName>
        <fullName>C-type lectin domain family 4 member L</fullName>
    </alternativeName>
    <alternativeName>
        <fullName>Dendritic cell-specific ICAM-3-grabbing non-integrin 1</fullName>
        <shortName>DC-SIGN</shortName>
        <shortName>DC-SIGN1</shortName>
    </alternativeName>
    <cdAntigenName>CD209</cdAntigenName>
</protein>
<gene>
    <name type="primary">CD209</name>
    <name type="synonym">CLEC4L</name>
</gene>
<reference key="1">
    <citation type="journal article" date="1992" name="Proc. Natl. Acad. Sci. U.S.A.">
        <title>Sequence and expression of a membrane-associated C-type lectin that exhibits CD4-independent binding of human immunodeficiency virus envelope glycoprotein gp 120.</title>
        <authorList>
            <person name="Curtis B.M."/>
            <person name="Scharnowske S."/>
            <person name="Watson A.J."/>
        </authorList>
    </citation>
    <scope>NUCLEOTIDE SEQUENCE [MRNA] (ISOFORM 1)</scope>
    <scope>SUBCELLULAR LOCATION</scope>
    <scope>FUNCTION (MICROBIAL INFECTION)</scope>
    <scope>INTERACTION WITH HIV-1 GP120 (MICROBIAL INFECTION)</scope>
    <source>
        <tissue>Placenta</tissue>
    </source>
</reference>
<reference key="2">
    <citation type="journal article" date="2000" name="J. Immunol.">
        <title>DC-SIGN, a related gene, DC-SIGNR, and CD23 form a cluster on 19p13.</title>
        <authorList>
            <person name="Soilleux E.J."/>
            <person name="Barten R."/>
            <person name="Trowsdale J."/>
        </authorList>
    </citation>
    <scope>NUCLEOTIDE SEQUENCE [GENOMIC DNA] (ISOFORM 1)</scope>
</reference>
<reference key="3">
    <citation type="journal article" date="2001" name="J. Exp. Med.">
        <title>A dendritic cell-specific intercellular adhesion molecule 3-grabbing nonintegrin (DC-SIGN)-related protein is highly expressed on human liver sinusoidal endothelial cells and promotes HIV-1 infection.</title>
        <authorList>
            <person name="Bashirova A.A."/>
            <person name="Geijtenbeek T.B.H."/>
            <person name="van Duijnhoven G.C.F."/>
            <person name="van Vliet S.J."/>
            <person name="Eilering J.B.G."/>
            <person name="Martin M.P."/>
            <person name="Wu L."/>
            <person name="Martin T.D."/>
            <person name="Viebig N."/>
            <person name="Knolle P.A."/>
            <person name="Kewalramani V.N."/>
            <person name="van Kooyk Y."/>
            <person name="Carrington M."/>
        </authorList>
    </citation>
    <scope>NUCLEOTIDE SEQUENCE [MRNA] (ISOFORM 1)</scope>
    <scope>TISSUE SPECIFICITY</scope>
</reference>
<reference key="4">
    <citation type="journal article" date="2001" name="J. Biol. Chem.">
        <title>Extensive repertoire of membrane-bound and soluble dendritic cell-specific ICAM-3-grabbing nonintegrin 1 (DC-SIGN1) and DC-SIGN2 isoforms. Inter-individual variation in expression of DC-SIGN transcripts.</title>
        <authorList>
            <person name="Mummidi S."/>
            <person name="Catano G."/>
            <person name="Lam L."/>
            <person name="Hoefle A."/>
            <person name="Telles V."/>
            <person name="Begum K."/>
            <person name="Jimenez F."/>
            <person name="Ahuja S.S."/>
            <person name="Ahuja S.K."/>
        </authorList>
    </citation>
    <scope>NUCLEOTIDE SEQUENCE [MRNA] (ISOFORMS 1; 2; 3; 4; 5; 6; 7; 8; 9; 10; 11 AND 12)</scope>
    <scope>ALTERNATIVE SPLICING</scope>
    <scope>TISSUE SPECIFICITY</scope>
</reference>
<reference key="5">
    <citation type="journal article" date="2004" name="Nat. Genet.">
        <title>Complete sequencing and characterization of 21,243 full-length human cDNAs.</title>
        <authorList>
            <person name="Ota T."/>
            <person name="Suzuki Y."/>
            <person name="Nishikawa T."/>
            <person name="Otsuki T."/>
            <person name="Sugiyama T."/>
            <person name="Irie R."/>
            <person name="Wakamatsu A."/>
            <person name="Hayashi K."/>
            <person name="Sato H."/>
            <person name="Nagai K."/>
            <person name="Kimura K."/>
            <person name="Makita H."/>
            <person name="Sekine M."/>
            <person name="Obayashi M."/>
            <person name="Nishi T."/>
            <person name="Shibahara T."/>
            <person name="Tanaka T."/>
            <person name="Ishii S."/>
            <person name="Yamamoto J."/>
            <person name="Saito K."/>
            <person name="Kawai Y."/>
            <person name="Isono Y."/>
            <person name="Nakamura Y."/>
            <person name="Nagahari K."/>
            <person name="Murakami K."/>
            <person name="Yasuda T."/>
            <person name="Iwayanagi T."/>
            <person name="Wagatsuma M."/>
            <person name="Shiratori A."/>
            <person name="Sudo H."/>
            <person name="Hosoiri T."/>
            <person name="Kaku Y."/>
            <person name="Kodaira H."/>
            <person name="Kondo H."/>
            <person name="Sugawara M."/>
            <person name="Takahashi M."/>
            <person name="Kanda K."/>
            <person name="Yokoi T."/>
            <person name="Furuya T."/>
            <person name="Kikkawa E."/>
            <person name="Omura Y."/>
            <person name="Abe K."/>
            <person name="Kamihara K."/>
            <person name="Katsuta N."/>
            <person name="Sato K."/>
            <person name="Tanikawa M."/>
            <person name="Yamazaki M."/>
            <person name="Ninomiya K."/>
            <person name="Ishibashi T."/>
            <person name="Yamashita H."/>
            <person name="Murakawa K."/>
            <person name="Fujimori K."/>
            <person name="Tanai H."/>
            <person name="Kimata M."/>
            <person name="Watanabe M."/>
            <person name="Hiraoka S."/>
            <person name="Chiba Y."/>
            <person name="Ishida S."/>
            <person name="Ono Y."/>
            <person name="Takiguchi S."/>
            <person name="Watanabe S."/>
            <person name="Yosida M."/>
            <person name="Hotuta T."/>
            <person name="Kusano J."/>
            <person name="Kanehori K."/>
            <person name="Takahashi-Fujii A."/>
            <person name="Hara H."/>
            <person name="Tanase T.-O."/>
            <person name="Nomura Y."/>
            <person name="Togiya S."/>
            <person name="Komai F."/>
            <person name="Hara R."/>
            <person name="Takeuchi K."/>
            <person name="Arita M."/>
            <person name="Imose N."/>
            <person name="Musashino K."/>
            <person name="Yuuki H."/>
            <person name="Oshima A."/>
            <person name="Sasaki N."/>
            <person name="Aotsuka S."/>
            <person name="Yoshikawa Y."/>
            <person name="Matsunawa H."/>
            <person name="Ichihara T."/>
            <person name="Shiohata N."/>
            <person name="Sano S."/>
            <person name="Moriya S."/>
            <person name="Momiyama H."/>
            <person name="Satoh N."/>
            <person name="Takami S."/>
            <person name="Terashima Y."/>
            <person name="Suzuki O."/>
            <person name="Nakagawa S."/>
            <person name="Senoh A."/>
            <person name="Mizoguchi H."/>
            <person name="Goto Y."/>
            <person name="Shimizu F."/>
            <person name="Wakebe H."/>
            <person name="Hishigaki H."/>
            <person name="Watanabe T."/>
            <person name="Sugiyama A."/>
            <person name="Takemoto M."/>
            <person name="Kawakami B."/>
            <person name="Yamazaki M."/>
            <person name="Watanabe K."/>
            <person name="Kumagai A."/>
            <person name="Itakura S."/>
            <person name="Fukuzumi Y."/>
            <person name="Fujimori Y."/>
            <person name="Komiyama M."/>
            <person name="Tashiro H."/>
            <person name="Tanigami A."/>
            <person name="Fujiwara T."/>
            <person name="Ono T."/>
            <person name="Yamada K."/>
            <person name="Fujii Y."/>
            <person name="Ozaki K."/>
            <person name="Hirao M."/>
            <person name="Ohmori Y."/>
            <person name="Kawabata A."/>
            <person name="Hikiji T."/>
            <person name="Kobatake N."/>
            <person name="Inagaki H."/>
            <person name="Ikema Y."/>
            <person name="Okamoto S."/>
            <person name="Okitani R."/>
            <person name="Kawakami T."/>
            <person name="Noguchi S."/>
            <person name="Itoh T."/>
            <person name="Shigeta K."/>
            <person name="Senba T."/>
            <person name="Matsumura K."/>
            <person name="Nakajima Y."/>
            <person name="Mizuno T."/>
            <person name="Morinaga M."/>
            <person name="Sasaki M."/>
            <person name="Togashi T."/>
            <person name="Oyama M."/>
            <person name="Hata H."/>
            <person name="Watanabe M."/>
            <person name="Komatsu T."/>
            <person name="Mizushima-Sugano J."/>
            <person name="Satoh T."/>
            <person name="Shirai Y."/>
            <person name="Takahashi Y."/>
            <person name="Nakagawa K."/>
            <person name="Okumura K."/>
            <person name="Nagase T."/>
            <person name="Nomura N."/>
            <person name="Kikuchi H."/>
            <person name="Masuho Y."/>
            <person name="Yamashita R."/>
            <person name="Nakai K."/>
            <person name="Yada T."/>
            <person name="Nakamura Y."/>
            <person name="Ohara O."/>
            <person name="Isogai T."/>
            <person name="Sugano S."/>
        </authorList>
    </citation>
    <scope>NUCLEOTIDE SEQUENCE [LARGE SCALE MRNA] (ISOFORM 1)</scope>
    <source>
        <tissue>Uterus</tissue>
    </source>
</reference>
<reference key="6">
    <citation type="journal article" date="2004" name="Nature">
        <title>The DNA sequence and biology of human chromosome 19.</title>
        <authorList>
            <person name="Grimwood J."/>
            <person name="Gordon L.A."/>
            <person name="Olsen A.S."/>
            <person name="Terry A."/>
            <person name="Schmutz J."/>
            <person name="Lamerdin J.E."/>
            <person name="Hellsten U."/>
            <person name="Goodstein D."/>
            <person name="Couronne O."/>
            <person name="Tran-Gyamfi M."/>
            <person name="Aerts A."/>
            <person name="Altherr M."/>
            <person name="Ashworth L."/>
            <person name="Bajorek E."/>
            <person name="Black S."/>
            <person name="Branscomb E."/>
            <person name="Caenepeel S."/>
            <person name="Carrano A.V."/>
            <person name="Caoile C."/>
            <person name="Chan Y.M."/>
            <person name="Christensen M."/>
            <person name="Cleland C.A."/>
            <person name="Copeland A."/>
            <person name="Dalin E."/>
            <person name="Dehal P."/>
            <person name="Denys M."/>
            <person name="Detter J.C."/>
            <person name="Escobar J."/>
            <person name="Flowers D."/>
            <person name="Fotopulos D."/>
            <person name="Garcia C."/>
            <person name="Georgescu A.M."/>
            <person name="Glavina T."/>
            <person name="Gomez M."/>
            <person name="Gonzales E."/>
            <person name="Groza M."/>
            <person name="Hammon N."/>
            <person name="Hawkins T."/>
            <person name="Haydu L."/>
            <person name="Ho I."/>
            <person name="Huang W."/>
            <person name="Israni S."/>
            <person name="Jett J."/>
            <person name="Kadner K."/>
            <person name="Kimball H."/>
            <person name="Kobayashi A."/>
            <person name="Larionov V."/>
            <person name="Leem S.-H."/>
            <person name="Lopez F."/>
            <person name="Lou Y."/>
            <person name="Lowry S."/>
            <person name="Malfatti S."/>
            <person name="Martinez D."/>
            <person name="McCready P.M."/>
            <person name="Medina C."/>
            <person name="Morgan J."/>
            <person name="Nelson K."/>
            <person name="Nolan M."/>
            <person name="Ovcharenko I."/>
            <person name="Pitluck S."/>
            <person name="Pollard M."/>
            <person name="Popkie A.P."/>
            <person name="Predki P."/>
            <person name="Quan G."/>
            <person name="Ramirez L."/>
            <person name="Rash S."/>
            <person name="Retterer J."/>
            <person name="Rodriguez A."/>
            <person name="Rogers S."/>
            <person name="Salamov A."/>
            <person name="Salazar A."/>
            <person name="She X."/>
            <person name="Smith D."/>
            <person name="Slezak T."/>
            <person name="Solovyev V."/>
            <person name="Thayer N."/>
            <person name="Tice H."/>
            <person name="Tsai M."/>
            <person name="Ustaszewska A."/>
            <person name="Vo N."/>
            <person name="Wagner M."/>
            <person name="Wheeler J."/>
            <person name="Wu K."/>
            <person name="Xie G."/>
            <person name="Yang J."/>
            <person name="Dubchak I."/>
            <person name="Furey T.S."/>
            <person name="DeJong P."/>
            <person name="Dickson M."/>
            <person name="Gordon D."/>
            <person name="Eichler E.E."/>
            <person name="Pennacchio L.A."/>
            <person name="Richardson P."/>
            <person name="Stubbs L."/>
            <person name="Rokhsar D.S."/>
            <person name="Myers R.M."/>
            <person name="Rubin E.M."/>
            <person name="Lucas S.M."/>
        </authorList>
    </citation>
    <scope>NUCLEOTIDE SEQUENCE [LARGE SCALE GENOMIC DNA]</scope>
</reference>
<reference key="7">
    <citation type="submission" date="2005-09" db="EMBL/GenBank/DDBJ databases">
        <authorList>
            <person name="Mural R.J."/>
            <person name="Istrail S."/>
            <person name="Sutton G.G."/>
            <person name="Florea L."/>
            <person name="Halpern A.L."/>
            <person name="Mobarry C.M."/>
            <person name="Lippert R."/>
            <person name="Walenz B."/>
            <person name="Shatkay H."/>
            <person name="Dew I."/>
            <person name="Miller J.R."/>
            <person name="Flanigan M.J."/>
            <person name="Edwards N.J."/>
            <person name="Bolanos R."/>
            <person name="Fasulo D."/>
            <person name="Halldorsson B.V."/>
            <person name="Hannenhalli S."/>
            <person name="Turner R."/>
            <person name="Yooseph S."/>
            <person name="Lu F."/>
            <person name="Nusskern D.R."/>
            <person name="Shue B.C."/>
            <person name="Zheng X.H."/>
            <person name="Zhong F."/>
            <person name="Delcher A.L."/>
            <person name="Huson D.H."/>
            <person name="Kravitz S.A."/>
            <person name="Mouchard L."/>
            <person name="Reinert K."/>
            <person name="Remington K.A."/>
            <person name="Clark A.G."/>
            <person name="Waterman M.S."/>
            <person name="Eichler E.E."/>
            <person name="Adams M.D."/>
            <person name="Hunkapiller M.W."/>
            <person name="Myers E.W."/>
            <person name="Venter J.C."/>
        </authorList>
    </citation>
    <scope>NUCLEOTIDE SEQUENCE [LARGE SCALE GENOMIC DNA]</scope>
</reference>
<reference key="8">
    <citation type="journal article" date="2004" name="Genome Res.">
        <title>The status, quality, and expansion of the NIH full-length cDNA project: the Mammalian Gene Collection (MGC).</title>
        <authorList>
            <consortium name="The MGC Project Team"/>
        </authorList>
    </citation>
    <scope>NUCLEOTIDE SEQUENCE [LARGE SCALE MRNA] (ISOFORM 10)</scope>
</reference>
<reference key="9">
    <citation type="journal article" date="2000" name="Cell">
        <title>DC-SIGN, a dendritic cell-specific HIV-1-binding protein that enhances trans-infection of T cells.</title>
        <authorList>
            <person name="Geijtenbeek T.B.H."/>
            <person name="Kwon D.S."/>
            <person name="Torensma R."/>
            <person name="van Vliet S.J."/>
            <person name="van Duijnhoven G.C.F."/>
            <person name="Middel J."/>
            <person name="Cornelissen I.L."/>
            <person name="Nottet H.S."/>
            <person name="Kewalramani V.N."/>
            <person name="Littman D.R."/>
            <person name="Figdor C.G."/>
            <person name="van Kooyk Y."/>
        </authorList>
    </citation>
    <scope>FUNCTION</scope>
    <scope>INTERACTION WITH ICAM3</scope>
</reference>
<reference key="10">
    <citation type="journal article" date="2000" name="Nat. Immunol.">
        <title>DC-SIGN-ICAM-2 interaction mediates dendritic cell trafficking.</title>
        <authorList>
            <person name="Geijtenbeek T.B.H."/>
            <person name="Krooshoop D.J."/>
            <person name="Bleijs D.A."/>
            <person name="van Vliet S.J."/>
            <person name="van Duijnhoven G.C.F."/>
            <person name="Grabovsky V."/>
            <person name="Alon R."/>
            <person name="Figdor C.G."/>
            <person name="van Kooyk Y."/>
        </authorList>
    </citation>
    <scope>FUNCTION</scope>
    <scope>INTERACTION WITH ICAM2</scope>
</reference>
<reference key="11">
    <citation type="journal article" date="2001" name="J. Biol. Chem.">
        <title>A novel mechanism of carbohydrate recognition by the C-type lectins DC-SIGN and DC-SIGNR. Subunit organization and binding to multivalent ligands.</title>
        <authorList>
            <person name="Mitchell D.A."/>
            <person name="Fadden A.J."/>
            <person name="Drickamer K."/>
        </authorList>
    </citation>
    <scope>SUBUNIT</scope>
    <scope>LIGAND-BINDING</scope>
</reference>
<reference key="12">
    <citation type="journal article" date="2002" name="Immunity">
        <title>Human cytomegalovirus binding to DC-SIGN is required for dendritic cell infection and target cell trans-infection.</title>
        <authorList>
            <person name="Halary F."/>
            <person name="Amara A."/>
            <person name="Lortat-Jacob H."/>
            <person name="Messerle M."/>
            <person name="Delaunay T."/>
            <person name="Houles C."/>
            <person name="Fieschi F."/>
            <person name="Arenzana-Seisdedos F."/>
            <person name="Moreau J.-F."/>
            <person name="Dechanet-Merville J."/>
        </authorList>
    </citation>
    <scope>FUNCTION (MICROBIAL INFECTION)</scope>
    <scope>INTERACTION WITH CYTOMEGALOVIRUS GLYCOPROTEIN B (GB) (MICROBIAL INFECTION)</scope>
</reference>
<reference key="13">
    <citation type="journal article" date="2002" name="J. Biol. Chem.">
        <title>Identification of different binding sites in the dendritic cell-specific receptor DC-SIGN for intercellular adhesion molecule 3 and HIV-1.</title>
        <authorList>
            <person name="Geijtenbeek T.B.H."/>
            <person name="van Duijnhoven G.C.F."/>
            <person name="van Vliet S.J."/>
            <person name="Krieger E."/>
            <person name="Vriend G."/>
            <person name="Figdor C.G."/>
            <person name="van Kooyk Y."/>
        </authorList>
    </citation>
    <scope>FUNCTION (MICROBIAL INFECTION)</scope>
    <scope>INTERACTION WITH ICAM 3 AND HIV-1 GP120 (MICROBIAL INFECTION)</scope>
    <scope>MUTAGENESIS OF ASP-320; GLU-324; GLU-347; ASN-349; ASN-350; ASP-355; ASN-365 AND ASP-366</scope>
</reference>
<reference key="14">
    <citation type="journal article" date="2002" name="J. Immunol.">
        <title>The dendritic cell-specific adhesion receptor DC-SIGN internalizes antigen for presentation to T cells.</title>
        <authorList>
            <person name="Engering A."/>
            <person name="Geijtenbeek T.B.H."/>
            <person name="van Vliet S.J."/>
            <person name="Wijers M."/>
            <person name="van Liempt E."/>
            <person name="Demaurex N."/>
            <person name="Lanzavecchia A."/>
            <person name="Fransen J."/>
            <person name="Figdor C.G."/>
            <person name="Piguet V."/>
            <person name="van Kooyk Y."/>
        </authorList>
    </citation>
    <scope>FUNCTION</scope>
    <scope>MUTAGENESIS OF 14-LEU-LEU-15</scope>
</reference>
<reference key="15">
    <citation type="journal article" date="2002" name="Immunity">
        <title>DC-SIGN-mediated internalization of HIV is required for trans-enhancement of T cell infection.</title>
        <authorList>
            <person name="Kwon D.S."/>
            <person name="Gregorio G."/>
            <person name="Bitton N."/>
            <person name="Hendrickson W.A."/>
            <person name="Littman D.R."/>
        </authorList>
    </citation>
    <scope>ROLE IN HIV-1 INFECTION (MICROBIAL INFECTION)</scope>
</reference>
<reference key="16">
    <citation type="journal article" date="2003" name="J. Virol.">
        <title>Differential N-linked glycosylation of human immunodeficiency virus and Ebola virus envelope glycoproteins modulates interactions with DC-SIGN and DC-SIGNR.</title>
        <authorList>
            <person name="Lin G."/>
            <person name="Simmons G."/>
            <person name="Poehlmann S."/>
            <person name="Baribaud F."/>
            <person name="Ni H."/>
            <person name="Leslie G.J."/>
            <person name="Haggarty B.S."/>
            <person name="Bates P."/>
            <person name="Weissman D."/>
            <person name="Hoxie J.A."/>
            <person name="Doms R.W."/>
        </authorList>
    </citation>
    <scope>FUNCTION (MICROBIAL INFECTION)</scope>
    <scope>INTERACTION WITH HIV-1 GP120; HIV-2 GP120; SIV GP120 AND EBOLA GLYCOPROTEINS (MICROBIAL INFECTION)</scope>
</reference>
<reference key="17">
    <citation type="journal article" date="2003" name="J. Exp. Med.">
        <title>DC-SIGN (CD209) mediates dengue virus infection of human dendritic cells.</title>
        <authorList>
            <person name="Tassaneetrithep B."/>
            <person name="Burgess T.H."/>
            <person name="Granelli-Piperno A."/>
            <person name="Trumpfheller C."/>
            <person name="Finke J."/>
            <person name="Sun W."/>
            <person name="Eller M.A."/>
            <person name="Pattanapanyasat K."/>
            <person name="Sarasombath S."/>
            <person name="Birx D.L."/>
            <person name="Steinman R.M."/>
            <person name="Schlesinger S."/>
            <person name="Marovich M.A."/>
        </authorList>
    </citation>
    <scope>FUNCTION (MICROBIAL INFECTION)</scope>
    <scope>INTERACTION WITH DENGUE VIRUS ENVELOPE E PROTEIN (MICROBIAL INFECTION)</scope>
</reference>
<reference key="18">
    <citation type="journal article" date="2003" name="J. Virol.">
        <title>Inhibition of human immunodeficiency virus type 1 Env-mediated fusion by DC-SIGN.</title>
        <authorList>
            <person name="Nobile C."/>
            <person name="Moris A."/>
            <person name="Porrot F."/>
            <person name="Sol-Foulon N."/>
            <person name="Schwartz O."/>
        </authorList>
    </citation>
    <scope>FUNCTION (MICROBIAL INFECTION) IN HIV-1 INFECTION</scope>
</reference>
<reference key="19">
    <citation type="journal article" date="2003" name="J. Immunol.">
        <title>Carbohydrate profiling identifies new pathogens that interact with dendritic cell-specific ICAM-3-grabbing nonintegrin on dendritic cells.</title>
        <authorList>
            <person name="Appelmelk B.J."/>
            <person name="van Die I."/>
            <person name="van Vliet S.J."/>
            <person name="Vandenbroucke-Grauls C.M."/>
            <person name="Geijtenbeek T.B.H."/>
            <person name="van Kooyk Y."/>
        </authorList>
    </citation>
    <scope>FUNCTION</scope>
</reference>
<reference key="20">
    <citation type="journal article" date="2003" name="Nat. Rev. Immunol.">
        <title>DC-SIGN: escape mechanism for pathogens.</title>
        <authorList>
            <person name="van Kooyk Y."/>
            <person name="Geijtenbeek T.B.H."/>
        </authorList>
    </citation>
    <scope>REVIEW ON ROLE IN HIV-1 INFECTION AND ON PATHOGEN BINDING (MICROBIAL INFECTION)</scope>
</reference>
<reference key="21">
    <citation type="journal article" date="2003" name="J. Leukoc. Biol.">
        <title>The role of dendritic cell C-type lectin receptors in HIV pathogenesis.</title>
        <authorList>
            <person name="Turville S."/>
            <person name="Wilkinson J."/>
            <person name="Cameron P."/>
            <person name="Dable J."/>
            <person name="Cunningham A.L."/>
        </authorList>
    </citation>
    <scope>REVIEW ON ROLE IN HIV-1 INFECTION (MICROBIAL INFECTION)</scope>
</reference>
<reference key="22">
    <citation type="journal article" date="2003" name="Virology">
        <title>DC-SIGN and DC-SIGNR bind ebola glycoproteins and enhance infection of macrophages and endothelial cells.</title>
        <authorList>
            <person name="Simmons G."/>
            <person name="Reeves J.D."/>
            <person name="Grogan C.C."/>
            <person name="Vandenberghe L.H."/>
            <person name="Baribaud F."/>
            <person name="Whitbeck J.C."/>
            <person name="Burke E."/>
            <person name="Buchmeier M.J."/>
            <person name="Soilleux E.J."/>
            <person name="Riley J.L."/>
            <person name="Doms R.W."/>
            <person name="Bates P."/>
            <person name="Poehlmann S."/>
        </authorList>
    </citation>
    <scope>FUNCTION (MICROBIAL INFECTION)</scope>
    <scope>INTERACTION WITH EBOLAVIRUS GLYCOPROTEIN (MICROBIAL INFECTION)</scope>
</reference>
<reference key="23">
    <citation type="journal article" date="2004" name="Proc. Natl. Acad. Sci. U.S.A.">
        <title>L-SIGN (CD209L) and DC-SIGN (CD209) mediate transinfection of liver cells by hepatitis C virus.</title>
        <authorList>
            <person name="Cormier E.G."/>
            <person name="Durso R.J."/>
            <person name="Tsamis F."/>
            <person name="Boussemart L."/>
            <person name="Manix C."/>
            <person name="Olson W.C."/>
            <person name="Gardner J.P."/>
            <person name="Dragic T."/>
        </authorList>
    </citation>
    <scope>FUNCTION (MICROBIAL INFECTION)</scope>
    <scope>INTERACTION WITH HCV E2 GLYCOPROTEIN (MICROBIAL INFECTION)</scope>
</reference>
<reference key="24">
    <citation type="journal article" date="2004" name="J. Virol.">
        <title>pH-dependent entry of severe acute respiratory syndrome coronavirus is mediated by the spike glycoprotein and enhanced by dendritic cell transfer through DC-SIGN.</title>
        <authorList>
            <person name="Yang Z.Y."/>
            <person name="Huang Y."/>
            <person name="Ganesh L."/>
            <person name="Leung K."/>
            <person name="Kong W.P."/>
            <person name="Schwartz O."/>
            <person name="Subbarao K."/>
            <person name="Nabel G.J."/>
        </authorList>
    </citation>
    <scope>FUNCTION (MICROBIAL INFECTION)</scope>
    <scope>INTERACTION WITH SARS-COV SPIKE GLYCOPROTEIN (MICROBIAL INFECTION)V</scope>
</reference>
<reference key="25">
    <citation type="journal article" date="2004" name="J. Virol.">
        <title>DC-SIGN and DC-SIGNR interact with the glycoprotein of Marburg virus and the S protein of severe acute respiratory syndrome coronavirus.</title>
        <authorList>
            <person name="Marzi A."/>
            <person name="Gramberg T."/>
            <person name="Simmons G."/>
            <person name="Moeller P."/>
            <person name="Rennekamp A.J."/>
            <person name="Krumbiegel M."/>
            <person name="Geier M."/>
            <person name="Eisemann J."/>
            <person name="Turza N."/>
            <person name="Saunier B."/>
            <person name="Steinkasserer A."/>
            <person name="Becker S."/>
            <person name="Bates P."/>
            <person name="Hofmann H."/>
            <person name="Poehlmann S."/>
        </authorList>
    </citation>
    <scope>FUNCTION (MICROBIAL INFECTION)</scope>
    <scope>INTERACTION WITH MARBURG VIRUS GLYCOPROTEIN (MICROBIAL INFECTION)</scope>
</reference>
<reference key="26">
    <citation type="journal article" date="2005" name="FEBS Lett.">
        <title>Interactions of DC-SIGN with Mac-1 and CEACAM1 regulate contact between dendritic cells and neutrophils.</title>
        <authorList>
            <person name="van Gisbergen K.P."/>
            <person name="Ludwig I.S."/>
            <person name="Geijtenbeek T.B."/>
            <person name="van Kooyk Y."/>
        </authorList>
    </citation>
    <scope>INTERACTION WITH CEACAM1</scope>
</reference>
<reference key="27">
    <citation type="journal article" date="2005" name="Nat. Genet.">
        <title>A variant in the CD209 promoter is associated with severity of dengue disease.</title>
        <authorList>
            <person name="Sakuntabhai A."/>
            <person name="Turbpaiboon C."/>
            <person name="Casademont I."/>
            <person name="Chuansumrit A."/>
            <person name="Lowhnoo T."/>
            <person name="Kajaste-Rudnitski A."/>
            <person name="Kalayanarooj S.M."/>
            <person name="Tangnararatchakit K."/>
            <person name="Tangthawornchaikul N."/>
            <person name="Vasanawathana S."/>
            <person name="Chaiyaratana W."/>
            <person name="Yenchitsomanus P.T."/>
            <person name="Suriyaphol P."/>
            <person name="Avirutnan P."/>
            <person name="Chokephaibulkit K."/>
            <person name="Matsuda F."/>
            <person name="Yoksan S."/>
            <person name="Jacob Y."/>
            <person name="Lathrop G.M."/>
            <person name="Malasit P."/>
            <person name="Despres P."/>
            <person name="Julier C."/>
        </authorList>
    </citation>
    <scope>POLYMORPHISM</scope>
    <scope>INVOLVEMENT IN SUSCEPTIBILITY TO DENGUE VIRUS INFECTION (MICROBIAL INFECTION)</scope>
</reference>
<reference key="28">
    <citation type="journal article" date="2005" name="Biochem. J.">
        <title>Deciphering the molecular bases of Mycobacterium tuberculosis binding to the lectin DC-SIGN reveals an underestimated complexity.</title>
        <authorList>
            <person name="Pitarque S."/>
            <person name="Herrmann J.L."/>
            <person name="Duteyrat J.L."/>
            <person name="Jackson M."/>
            <person name="Stewart G.R."/>
            <person name="Lecointe F."/>
            <person name="Payre B."/>
            <person name="Schwartz O."/>
            <person name="Young D.B."/>
            <person name="Marchal G."/>
            <person name="Lagrange P.H."/>
            <person name="Puzo G."/>
            <person name="Gicquel B."/>
            <person name="Nigou J."/>
            <person name="Neyrolles O."/>
        </authorList>
    </citation>
    <scope>FUNCTION (MICROBIAL INFECTION) BY M.TUBERCULOSIS</scope>
</reference>
<reference key="29">
    <citation type="journal article" date="2006" name="PLoS Med.">
        <title>Promoter variation in the DC-SIGN-encoding gene CD209 is associated with tuberculosis.</title>
        <authorList>
            <person name="Barreiro L.B."/>
            <person name="Neyrolles O."/>
            <person name="Babb C.L."/>
            <person name="Tailleux L."/>
            <person name="Quach H."/>
            <person name="McElreavey K."/>
            <person name="Helden P.D."/>
            <person name="Hoal E.G."/>
            <person name="Gicquel B."/>
            <person name="Quintana-Murci L."/>
        </authorList>
    </citation>
    <scope>FUNCTION (MICROBIAL INFECTION)</scope>
    <scope>INVOLVEMENT IN M.TUBERCULOSIS SUSCEPTIBILITY (MICROBIAL INFECTION)</scope>
</reference>
<reference key="30">
    <citation type="journal article" date="2006" name="J. Virol.">
        <title>Measles virus targets DC-SIGN to enhance dendritic cell infection.</title>
        <authorList>
            <person name="de Witte L."/>
            <person name="Abt M."/>
            <person name="Schneider-Schaulies S."/>
            <person name="van Kooyk Y."/>
            <person name="Geijtenbeek T.B."/>
        </authorList>
    </citation>
    <scope>FUNCTION (MICROBIAL INFECTION)</scope>
    <scope>INTERACTION WITH MEASLES VIRUS HEMAGGLUTININ (MICROBIAL INFECTION)</scope>
</reference>
<reference key="31">
    <citation type="journal article" date="2006" name="J. Virol.">
        <title>West Nile virus discriminates between DC-SIGN and DC-SIGNR for cellular attachment and infection.</title>
        <authorList>
            <person name="Davis C.W."/>
            <person name="Nguyen H.Y."/>
            <person name="Hanna S.L."/>
            <person name="Sanchez M.D."/>
            <person name="Doms R.W."/>
            <person name="Pierson T.C."/>
        </authorList>
    </citation>
    <scope>FUNCTION (MICROBIAL INFECTION)</scope>
    <scope>INTERACTION WITH WEST-NILE VIRUS ENVELOPE GLYCOPROTEIN (MICROBIAL INFECTION)</scope>
</reference>
<reference key="32">
    <citation type="journal article" date="2006" name="Am. J. Pathol.">
        <title>Expression of DC-SIGN and DC-SIGNR on human sinusoidal endothelium: a role for capturing hepatitis C virus particles.</title>
        <authorList>
            <person name="Lai W.K."/>
            <person name="Sun P.J."/>
            <person name="Zhang J."/>
            <person name="Jennings A."/>
            <person name="Lalor P.F."/>
            <person name="Hubscher S."/>
            <person name="McKeating J.A."/>
            <person name="Adams D.H."/>
        </authorList>
    </citation>
    <scope>FUNCTION (MICROBIAL INFECTION)</scope>
    <scope>INTERACTION WITH HEPATITIS C VIRUS E1 AND E2 PROTEINS (MICROBIAL INFECTION)</scope>
</reference>
<reference key="33">
    <citation type="journal article" date="2010" name="Protein Cell">
        <title>Identification of four novel DC-SIGN ligands on Mycobacterium bovis BCG.</title>
        <authorList>
            <person name="Carroll M.V."/>
            <person name="Sim R.B."/>
            <person name="Bigi F."/>
            <person name="Jaekel A."/>
            <person name="Antrobus R."/>
            <person name="Mitchell D.A."/>
        </authorList>
    </citation>
    <scope>FUNCTION (MICROBIAL INFECTION)</scope>
    <scope>INTERACTION WITH M.BOVIS PROTEINS (MICROBIAL INFECTION)</scope>
</reference>
<reference key="34">
    <citation type="journal article" date="2012" name="Blood">
        <title>DC-SIGN, C1q, and gC1qR form a trimolecular receptor complex on the surface of monocyte-derived immature dendritic cells.</title>
        <authorList>
            <person name="Hosszu K.K."/>
            <person name="Valentino A."/>
            <person name="Vinayagasundaram U."/>
            <person name="Vinayagasundaram R."/>
            <person name="Joyce M.G."/>
            <person name="Ji Y."/>
            <person name="Peerschke E.I."/>
            <person name="Ghebrehiwet B."/>
        </authorList>
    </citation>
    <scope>INTERACTION WITH C1QBP</scope>
</reference>
<reference key="35">
    <citation type="journal article" date="2008" name="J. Gen. Virol.">
        <title>Dendritic cells mediate herpes simplex virus infection and transmission through the C-type lectin DC-SIGN.</title>
        <authorList>
            <person name="de Jong M.A."/>
            <person name="de Witte L."/>
            <person name="Bolmstedt A."/>
            <person name="van Kooyk Y."/>
            <person name="Geijtenbeek T.B."/>
        </authorList>
    </citation>
    <scope>FUNCTION (MICROBIAL INFECTION)</scope>
    <scope>INTERACTION WITH HERPES SIMPLEX VIRUS SURFACE PROTEINS (MICROBIAL INFECTION)</scope>
</reference>
<reference key="36">
    <citation type="journal article" date="2011" name="J. Virol.">
        <title>N-linked glycosylation facilitates sialic acid-independent attachment and entry of influenza A viruses into cells expressing DC-SIGN or L-SIGN.</title>
        <authorList>
            <person name="Londrigan S.L."/>
            <person name="Turville S.G."/>
            <person name="Tate M.D."/>
            <person name="Deng Y.M."/>
            <person name="Brooks A.G."/>
            <person name="Reading P.C."/>
        </authorList>
    </citation>
    <scope>FUNCTION (MICROBIAL INFECTION)</scope>
    <scope>INTERACTION WITH INFLUENZAVIRUS HEMAGGLUTININ (MICROBIAL INFECTION)</scope>
</reference>
<reference key="37">
    <citation type="journal article" date="2011" name="Cell Host Microbe">
        <title>DC-SIGN as a receptor for phleboviruses.</title>
        <authorList>
            <person name="Lozach P.Y."/>
            <person name="Kuehbacher A."/>
            <person name="Meier R."/>
            <person name="Mancini R."/>
            <person name="Bitto D."/>
            <person name="Bouloy M."/>
            <person name="Helenius A."/>
        </authorList>
    </citation>
    <scope>FUNCTION (MICROBIAL INFECTION)</scope>
    <scope>INTERACTION WITH RIFT FEVER VALLEY VIRUS GLYCOPROTEIN G (MICROBIAL INFECTION)</scope>
</reference>
<reference key="38">
    <citation type="journal article" date="2001" name="Science">
        <title>Structural basis for selective recognition of oligosaccharides by DC-SIGN and DC-SIGNR.</title>
        <authorList>
            <person name="Feinberg H."/>
            <person name="Mitchell D.A."/>
            <person name="Drickamer K."/>
            <person name="Weis W.I."/>
        </authorList>
    </citation>
    <scope>X-RAY CRYSTALLOGRAPHY (2.5 ANGSTROMS) OF 254-382 IN COMPLEX WITH GLCNAC(2)-MAN(3) PENTASACCHARIDE</scope>
</reference>
<reference key="39">
    <citation type="journal article" date="2012" name="PLoS ONE">
        <title>Human cytomegalovirus entry into dendritic cells occurs via a macropinocytosis-like pathway in a pH-independent and cholesterol-dependent manner.</title>
        <authorList>
            <person name="Haspot F."/>
            <person name="Lavault A."/>
            <person name="Sinzger C."/>
            <person name="Laib Sampaio K."/>
            <person name="Stierhof Y.D."/>
            <person name="Pilet P."/>
            <person name="Bressolette-Bodin C."/>
            <person name="Halary F."/>
        </authorList>
    </citation>
    <scope>FUNCTION (MICROBIAL INFECTION)</scope>
    <scope>INTERACTION WITH HUMAN CYTOMEGALOVIRUS /HHV-5 SURFACE PROTEINS (MICROBIAL INFECTION)</scope>
</reference>
<reference key="40">
    <citation type="journal article" date="2012" name="J. Virol.">
        <title>Respiratory syncytial virus glycoprotein G interacts with DC-SIGN and L-SIGN to activate ERK1 and ERK2.</title>
        <authorList>
            <person name="Johnson T.R."/>
            <person name="McLellan J.S."/>
            <person name="Graham B.S."/>
        </authorList>
    </citation>
    <scope>FUNCTION (MICROBIAL INFECTION)</scope>
    <scope>INTERACTION WITH RESPIRATORY SYNCYTIAL VIRUS GLYCOPROTEIN G (MICROBIAL INFECTION)</scope>
</reference>
<reference key="41">
    <citation type="journal article" date="2014" name="Arch. Virol.">
        <title>Distinct usage of three C-type lectins by Japanese encephalitis virus: DC-SIGN, DC-SIGNR, and LSECtin.</title>
        <authorList>
            <person name="Shimojima M."/>
            <person name="Takenouchi A."/>
            <person name="Shimoda H."/>
            <person name="Kimura N."/>
            <person name="Maeda K."/>
        </authorList>
    </citation>
    <scope>FUNCTION (MICROBIAL INFECTION)</scope>
    <scope>INTERACTION WITH JAPANESE ENCEPHALITIS VIRUS E PROTEIN (MICROBIAL INFECTION)</scope>
</reference>
<reference key="42">
    <citation type="journal article" date="2013" name="J. Virol.">
        <title>Role of DC-SIGN in Lassa virus entry into human dendritic cells.</title>
        <authorList>
            <person name="Goncalves A.R."/>
            <person name="Moraz M.L."/>
            <person name="Pasquato A."/>
            <person name="Helenius A."/>
            <person name="Lozach P.Y."/>
            <person name="Kunz S."/>
        </authorList>
    </citation>
    <scope>FUNCTION (MICROBIAL INFECTION)</scope>
    <scope>INTERACTION WITH LASSA VIRUS GLYCOPROTEIN (MICROBIAL INFECTION)</scope>
</reference>
<reference key="43">
    <citation type="journal article" date="2012" name="Curr. Opin. Virol.">
        <title>Virus entry: old viruses, new receptors.</title>
        <authorList>
            <person name="Backovic M."/>
            <person name="Rey F.A."/>
        </authorList>
    </citation>
    <scope>FUNCTION (MICROBIAL INFECTION)</scope>
</reference>
<sequence length="404" mass="45775">MSDSKEPRLQQLGLLEEEQLRGLGFRQTRGYKSLAGCLGHGPLVLQLLSFTLLAGLLVQVSKVPSSISQEQSRQDAIYQNLTQLKAAVGELSEKSKLQEIYQELTQLKAAVGELPEKSKLQEIYQELTRLKAAVGELPEKSKLQEIYQELTWLKAAVGELPEKSKMQEIYQELTRLKAAVGELPEKSKQQEIYQELTRLKAAVGELPEKSKQQEIYQELTRLKAAVGELPEKSKQQEIYQELTQLKAAVERLCHPCPWEWTFFQGNCYFMSNSQRNWHDSITACKEVGAQLVVIKSAEEQNFLQLQSSRSNRFTWMGLSDLNQEGTWQWVDGSPLLPSFKQYWNRGEPNNVGEEDCAEFSGNGWNDDKCNLAKFWICKKSAASCSRDEEQFLSPAPATPNPPPA</sequence>
<organism>
    <name type="scientific">Homo sapiens</name>
    <name type="common">Human</name>
    <dbReference type="NCBI Taxonomy" id="9606"/>
    <lineage>
        <taxon>Eukaryota</taxon>
        <taxon>Metazoa</taxon>
        <taxon>Chordata</taxon>
        <taxon>Craniata</taxon>
        <taxon>Vertebrata</taxon>
        <taxon>Euteleostomi</taxon>
        <taxon>Mammalia</taxon>
        <taxon>Eutheria</taxon>
        <taxon>Euarchontoglires</taxon>
        <taxon>Primates</taxon>
        <taxon>Haplorrhini</taxon>
        <taxon>Catarrhini</taxon>
        <taxon>Hominidae</taxon>
        <taxon>Homo</taxon>
    </lineage>
</organism>
<dbReference type="EMBL" id="M98457">
    <property type="protein sequence ID" value="AAF77072.1"/>
    <property type="molecule type" value="mRNA"/>
</dbReference>
<dbReference type="EMBL" id="AF209479">
    <property type="protein sequence ID" value="AAG13814.1"/>
    <property type="molecule type" value="Genomic_DNA"/>
</dbReference>
<dbReference type="EMBL" id="AF290886">
    <property type="protein sequence ID" value="AAK20997.1"/>
    <property type="molecule type" value="mRNA"/>
</dbReference>
<dbReference type="EMBL" id="AY042221">
    <property type="protein sequence ID" value="AAK91846.1"/>
    <property type="molecule type" value="mRNA"/>
</dbReference>
<dbReference type="EMBL" id="AY042222">
    <property type="protein sequence ID" value="AAK91847.1"/>
    <property type="molecule type" value="mRNA"/>
</dbReference>
<dbReference type="EMBL" id="AY042223">
    <property type="protein sequence ID" value="AAK91848.1"/>
    <property type="molecule type" value="mRNA"/>
</dbReference>
<dbReference type="EMBL" id="AY042224">
    <property type="protein sequence ID" value="AAK91849.1"/>
    <property type="molecule type" value="mRNA"/>
</dbReference>
<dbReference type="EMBL" id="AY042225">
    <property type="protein sequence ID" value="AAK91850.1"/>
    <property type="molecule type" value="mRNA"/>
</dbReference>
<dbReference type="EMBL" id="AY042226">
    <property type="protein sequence ID" value="AAK91851.1"/>
    <property type="molecule type" value="mRNA"/>
</dbReference>
<dbReference type="EMBL" id="AY042227">
    <property type="protein sequence ID" value="AAK91852.1"/>
    <property type="molecule type" value="mRNA"/>
</dbReference>
<dbReference type="EMBL" id="AY042228">
    <property type="protein sequence ID" value="AAK91853.1"/>
    <property type="molecule type" value="mRNA"/>
</dbReference>
<dbReference type="EMBL" id="AY042229">
    <property type="protein sequence ID" value="AAK91854.1"/>
    <property type="molecule type" value="mRNA"/>
</dbReference>
<dbReference type="EMBL" id="AY042230">
    <property type="protein sequence ID" value="AAK91855.1"/>
    <property type="molecule type" value="mRNA"/>
</dbReference>
<dbReference type="EMBL" id="AY042231">
    <property type="protein sequence ID" value="AAK91856.1"/>
    <property type="molecule type" value="mRNA"/>
</dbReference>
<dbReference type="EMBL" id="AY042232">
    <property type="protein sequence ID" value="AAK91857.1"/>
    <property type="molecule type" value="mRNA"/>
</dbReference>
<dbReference type="EMBL" id="AY042233">
    <property type="protein sequence ID" value="AAK91858.1"/>
    <property type="status" value="ALT_SEQ"/>
    <property type="molecule type" value="mRNA"/>
</dbReference>
<dbReference type="EMBL" id="AK293089">
    <property type="protein sequence ID" value="BAF85778.1"/>
    <property type="molecule type" value="mRNA"/>
</dbReference>
<dbReference type="EMBL" id="AC008763">
    <property type="status" value="NOT_ANNOTATED_CDS"/>
    <property type="molecule type" value="Genomic_DNA"/>
</dbReference>
<dbReference type="EMBL" id="AC008812">
    <property type="status" value="NOT_ANNOTATED_CDS"/>
    <property type="molecule type" value="Genomic_DNA"/>
</dbReference>
<dbReference type="EMBL" id="CH471139">
    <property type="protein sequence ID" value="EAW68991.1"/>
    <property type="molecule type" value="Genomic_DNA"/>
</dbReference>
<dbReference type="EMBL" id="CH471139">
    <property type="protein sequence ID" value="EAW68993.1"/>
    <property type="molecule type" value="Genomic_DNA"/>
</dbReference>
<dbReference type="EMBL" id="CH471139">
    <property type="protein sequence ID" value="EAW68997.1"/>
    <property type="molecule type" value="Genomic_DNA"/>
</dbReference>
<dbReference type="EMBL" id="CH471139">
    <property type="protein sequence ID" value="EAW68998.1"/>
    <property type="molecule type" value="Genomic_DNA"/>
</dbReference>
<dbReference type="EMBL" id="BC110615">
    <property type="protein sequence ID" value="AAI10616.1"/>
    <property type="molecule type" value="mRNA"/>
</dbReference>
<dbReference type="CCDS" id="CCDS12186.1">
    <molecule id="Q9NNX6-1"/>
</dbReference>
<dbReference type="CCDS" id="CCDS45949.1">
    <molecule id="Q9NNX6-7"/>
</dbReference>
<dbReference type="CCDS" id="CCDS45950.1">
    <molecule id="Q9NNX6-6"/>
</dbReference>
<dbReference type="CCDS" id="CCDS45951.1">
    <molecule id="Q9NNX6-2"/>
</dbReference>
<dbReference type="CCDS" id="CCDS45952.1">
    <molecule id="Q9NNX6-3"/>
</dbReference>
<dbReference type="CCDS" id="CCDS59344.1">
    <molecule id="Q9NNX6-8"/>
</dbReference>
<dbReference type="PIR" id="A46274">
    <property type="entry name" value="A46274"/>
</dbReference>
<dbReference type="RefSeq" id="NP_001138365.1">
    <property type="nucleotide sequence ID" value="NM_001144893.1"/>
</dbReference>
<dbReference type="RefSeq" id="NP_001138366.1">
    <molecule id="Q9NNX6-7"/>
    <property type="nucleotide sequence ID" value="NM_001144894.2"/>
</dbReference>
<dbReference type="RefSeq" id="NP_001138367.1">
    <molecule id="Q9NNX6-3"/>
    <property type="nucleotide sequence ID" value="NM_001144895.2"/>
</dbReference>
<dbReference type="RefSeq" id="NP_001138368.1">
    <molecule id="Q9NNX6-6"/>
    <property type="nucleotide sequence ID" value="NM_001144896.2"/>
</dbReference>
<dbReference type="RefSeq" id="NP_001138369.1">
    <molecule id="Q9NNX6-2"/>
    <property type="nucleotide sequence ID" value="NM_001144897.2"/>
</dbReference>
<dbReference type="RefSeq" id="NP_066978.1">
    <molecule id="Q9NNX6-1"/>
    <property type="nucleotide sequence ID" value="NM_021155.4"/>
</dbReference>
<dbReference type="PDB" id="1K9I">
    <property type="method" value="X-ray"/>
    <property type="resolution" value="2.50 A"/>
    <property type="chains" value="A/B/C/D/E/F/G/H/I/J=250-404"/>
</dbReference>
<dbReference type="PDB" id="1SL4">
    <property type="method" value="X-ray"/>
    <property type="resolution" value="1.55 A"/>
    <property type="chains" value="A=250-404"/>
</dbReference>
<dbReference type="PDB" id="1SL5">
    <property type="method" value="X-ray"/>
    <property type="resolution" value="1.80 A"/>
    <property type="chains" value="A=250-388"/>
</dbReference>
<dbReference type="PDB" id="2B6B">
    <property type="method" value="EM"/>
    <property type="resolution" value="25.00 A"/>
    <property type="chains" value="D=251-404"/>
</dbReference>
<dbReference type="PDB" id="2IT5">
    <property type="method" value="X-ray"/>
    <property type="resolution" value="2.40 A"/>
    <property type="chains" value="A=250-388"/>
</dbReference>
<dbReference type="PDB" id="2IT6">
    <property type="method" value="X-ray"/>
    <property type="resolution" value="1.95 A"/>
    <property type="chains" value="A=250-404"/>
</dbReference>
<dbReference type="PDB" id="2XR5">
    <property type="method" value="X-ray"/>
    <property type="resolution" value="1.42 A"/>
    <property type="chains" value="A=254-404"/>
</dbReference>
<dbReference type="PDB" id="2XR6">
    <property type="method" value="X-ray"/>
    <property type="resolution" value="1.35 A"/>
    <property type="chains" value="A=250-404"/>
</dbReference>
<dbReference type="PDB" id="6GHV">
    <property type="method" value="X-ray"/>
    <property type="resolution" value="2.10 A"/>
    <property type="chains" value="A/B/C/D/E/F=250-404"/>
</dbReference>
<dbReference type="PDB" id="7NL6">
    <property type="method" value="X-ray"/>
    <property type="resolution" value="2.20 A"/>
    <property type="chains" value="A=250-404"/>
</dbReference>
<dbReference type="PDB" id="7NL7">
    <property type="method" value="X-ray"/>
    <property type="resolution" value="2.10 A"/>
    <property type="chains" value="A=250-404"/>
</dbReference>
<dbReference type="PDB" id="9EMQ">
    <property type="method" value="X-ray"/>
    <property type="resolution" value="1.80 A"/>
    <property type="chains" value="A=250-404"/>
</dbReference>
<dbReference type="PDB" id="9EMR">
    <property type="method" value="X-ray"/>
    <property type="resolution" value="1.90 A"/>
    <property type="chains" value="A/B/C=250-404"/>
</dbReference>
<dbReference type="PDB" id="9EMS">
    <property type="method" value="X-ray"/>
    <property type="resolution" value="2.90 A"/>
    <property type="chains" value="A=250-404"/>
</dbReference>
<dbReference type="PDBsum" id="1K9I"/>
<dbReference type="PDBsum" id="1SL4"/>
<dbReference type="PDBsum" id="1SL5"/>
<dbReference type="PDBsum" id="2B6B"/>
<dbReference type="PDBsum" id="2IT5"/>
<dbReference type="PDBsum" id="2IT6"/>
<dbReference type="PDBsum" id="2XR5"/>
<dbReference type="PDBsum" id="2XR6"/>
<dbReference type="PDBsum" id="6GHV"/>
<dbReference type="PDBsum" id="7NL6"/>
<dbReference type="PDBsum" id="7NL7"/>
<dbReference type="PDBsum" id="9EMQ"/>
<dbReference type="PDBsum" id="9EMR"/>
<dbReference type="PDBsum" id="9EMS"/>
<dbReference type="BMRB" id="Q9NNX6"/>
<dbReference type="SMR" id="Q9NNX6"/>
<dbReference type="BioGRID" id="119051">
    <property type="interactions" value="23"/>
</dbReference>
<dbReference type="DIP" id="DIP-60629N"/>
<dbReference type="FunCoup" id="Q9NNX6">
    <property type="interactions" value="273"/>
</dbReference>
<dbReference type="IntAct" id="Q9NNX6">
    <property type="interactions" value="28"/>
</dbReference>
<dbReference type="STRING" id="9606.ENSP00000315477"/>
<dbReference type="BindingDB" id="Q9NNX6"/>
<dbReference type="ChEMBL" id="CHEMBL1795114"/>
<dbReference type="UniLectin" id="Q9NNX6"/>
<dbReference type="GlyCosmos" id="Q9NNX6">
    <property type="glycosylation" value="1 site, No reported glycans"/>
</dbReference>
<dbReference type="GlyGen" id="Q9NNX6">
    <property type="glycosylation" value="3 sites, 4 N-linked glycans (1 site)"/>
</dbReference>
<dbReference type="iPTMnet" id="Q9NNX6"/>
<dbReference type="PhosphoSitePlus" id="Q9NNX6"/>
<dbReference type="SwissPalm" id="Q9NNX6"/>
<dbReference type="BioMuta" id="CD209"/>
<dbReference type="DMDM" id="46396012"/>
<dbReference type="REPRODUCTION-2DPAGE" id="Q9NNX6"/>
<dbReference type="MassIVE" id="Q9NNX6"/>
<dbReference type="PaxDb" id="9606-ENSP00000315477"/>
<dbReference type="PeptideAtlas" id="Q9NNX6"/>
<dbReference type="ProteomicsDB" id="33898"/>
<dbReference type="ProteomicsDB" id="81864">
    <molecule id="Q9NNX6-1"/>
</dbReference>
<dbReference type="ProteomicsDB" id="81865">
    <molecule id="Q9NNX6-10"/>
</dbReference>
<dbReference type="ProteomicsDB" id="81866">
    <molecule id="Q9NNX6-11"/>
</dbReference>
<dbReference type="ProteomicsDB" id="81867">
    <molecule id="Q9NNX6-12"/>
</dbReference>
<dbReference type="ProteomicsDB" id="81869">
    <molecule id="Q9NNX6-2"/>
</dbReference>
<dbReference type="ProteomicsDB" id="81870">
    <molecule id="Q9NNX6-3"/>
</dbReference>
<dbReference type="ProteomicsDB" id="81871">
    <molecule id="Q9NNX6-4"/>
</dbReference>
<dbReference type="ProteomicsDB" id="81872">
    <molecule id="Q9NNX6-5"/>
</dbReference>
<dbReference type="ProteomicsDB" id="81873">
    <molecule id="Q9NNX6-6"/>
</dbReference>
<dbReference type="ProteomicsDB" id="81874">
    <molecule id="Q9NNX6-7"/>
</dbReference>
<dbReference type="ProteomicsDB" id="81875">
    <molecule id="Q9NNX6-8"/>
</dbReference>
<dbReference type="ProteomicsDB" id="81876">
    <molecule id="Q9NNX6-9"/>
</dbReference>
<dbReference type="ABCD" id="Q9NNX6">
    <property type="antibodies" value="23 sequenced antibodies"/>
</dbReference>
<dbReference type="Antibodypedia" id="12203">
    <property type="antibodies" value="1541 antibodies from 46 providers"/>
</dbReference>
<dbReference type="DNASU" id="30835"/>
<dbReference type="Ensembl" id="ENST00000204801.12">
    <molecule id="Q9NNX6-7"/>
    <property type="protein sequence ID" value="ENSP00000204801.7"/>
    <property type="gene ID" value="ENSG00000090659.18"/>
</dbReference>
<dbReference type="Ensembl" id="ENST00000315591.12">
    <molecule id="Q9NNX6-6"/>
    <property type="protein sequence ID" value="ENSP00000315407.7"/>
    <property type="gene ID" value="ENSG00000090659.18"/>
</dbReference>
<dbReference type="Ensembl" id="ENST00000315599.12">
    <molecule id="Q9NNX6-1"/>
    <property type="protein sequence ID" value="ENSP00000315477.6"/>
    <property type="gene ID" value="ENSG00000090659.18"/>
</dbReference>
<dbReference type="Ensembl" id="ENST00000354397.10">
    <molecule id="Q9NNX6-2"/>
    <property type="protein sequence ID" value="ENSP00000346373.5"/>
    <property type="gene ID" value="ENSG00000090659.18"/>
</dbReference>
<dbReference type="Ensembl" id="ENST00000394161.9">
    <molecule id="Q9NNX6-4"/>
    <property type="protein sequence ID" value="ENSP00000377716.4"/>
    <property type="gene ID" value="ENSG00000090659.18"/>
</dbReference>
<dbReference type="Ensembl" id="ENST00000601256.1">
    <molecule id="Q9NNX6-12"/>
    <property type="protein sequence ID" value="ENSP00000470658.1"/>
    <property type="gene ID" value="ENSG00000090659.18"/>
</dbReference>
<dbReference type="Ensembl" id="ENST00000601951.5">
    <molecule id="Q9NNX6-10"/>
    <property type="protein sequence ID" value="ENSP00000468827.1"/>
    <property type="gene ID" value="ENSG00000090659.18"/>
</dbReference>
<dbReference type="Ensembl" id="ENST00000602261.5">
    <molecule id="Q9NNX6-3"/>
    <property type="protein sequence ID" value="ENSP00000471137.1"/>
    <property type="gene ID" value="ENSG00000090659.18"/>
</dbReference>
<dbReference type="GeneID" id="30835"/>
<dbReference type="KEGG" id="hsa:30835"/>
<dbReference type="MANE-Select" id="ENST00000315599.12">
    <property type="protein sequence ID" value="ENSP00000315477.6"/>
    <property type="RefSeq nucleotide sequence ID" value="NM_021155.4"/>
    <property type="RefSeq protein sequence ID" value="NP_066978.1"/>
</dbReference>
<dbReference type="UCSC" id="uc002mhr.3">
    <molecule id="Q9NNX6-1"/>
    <property type="organism name" value="human"/>
</dbReference>
<dbReference type="AGR" id="HGNC:1641"/>
<dbReference type="CTD" id="30835"/>
<dbReference type="DisGeNET" id="30835"/>
<dbReference type="GeneCards" id="CD209"/>
<dbReference type="HGNC" id="HGNC:1641">
    <property type="gene designation" value="CD209"/>
</dbReference>
<dbReference type="HPA" id="ENSG00000090659">
    <property type="expression patterns" value="Tissue enhanced (adipose tissue, placenta)"/>
</dbReference>
<dbReference type="MalaCards" id="CD209"/>
<dbReference type="MIM" id="604672">
    <property type="type" value="gene+phenotype"/>
</dbReference>
<dbReference type="MIM" id="607948">
    <property type="type" value="phenotype"/>
</dbReference>
<dbReference type="MIM" id="614371">
    <property type="type" value="phenotype"/>
</dbReference>
<dbReference type="neXtProt" id="NX_Q9NNX6"/>
<dbReference type="OpenTargets" id="ENSG00000090659"/>
<dbReference type="PharmGKB" id="PA26199"/>
<dbReference type="VEuPathDB" id="HostDB:ENSG00000090659"/>
<dbReference type="eggNOG" id="KOG4297">
    <property type="taxonomic scope" value="Eukaryota"/>
</dbReference>
<dbReference type="GeneTree" id="ENSGT00940000155012"/>
<dbReference type="HOGENOM" id="CLU_1577990_0_0_1"/>
<dbReference type="InParanoid" id="Q9NNX6"/>
<dbReference type="OrthoDB" id="8950604at2759"/>
<dbReference type="PAN-GO" id="Q9NNX6">
    <property type="GO annotations" value="3 GO annotations based on evolutionary models"/>
</dbReference>
<dbReference type="PhylomeDB" id="Q9NNX6"/>
<dbReference type="TreeFam" id="TF333341"/>
<dbReference type="PathwayCommons" id="Q9NNX6"/>
<dbReference type="Reactome" id="R-HSA-5621575">
    <property type="pathway name" value="CD209 (DC-SIGN) signaling"/>
</dbReference>
<dbReference type="Reactome" id="R-HSA-8851680">
    <property type="pathway name" value="Butyrophilin (BTN) family interactions"/>
</dbReference>
<dbReference type="Reactome" id="R-HSA-9833110">
    <property type="pathway name" value="RSV-host interactions"/>
</dbReference>
<dbReference type="SignaLink" id="Q9NNX6"/>
<dbReference type="SIGNOR" id="Q9NNX6"/>
<dbReference type="BioGRID-ORCS" id="30835">
    <property type="hits" value="7 hits in 1147 CRISPR screens"/>
</dbReference>
<dbReference type="EvolutionaryTrace" id="Q9NNX6"/>
<dbReference type="GeneWiki" id="DC-SIGN"/>
<dbReference type="GenomeRNAi" id="30835"/>
<dbReference type="Pharos" id="Q9NNX6">
    <property type="development level" value="Tchem"/>
</dbReference>
<dbReference type="PRO" id="PR:Q9NNX6"/>
<dbReference type="Proteomes" id="UP000005640">
    <property type="component" value="Chromosome 19"/>
</dbReference>
<dbReference type="RNAct" id="Q9NNX6">
    <property type="molecule type" value="protein"/>
</dbReference>
<dbReference type="Bgee" id="ENSG00000090659">
    <property type="expression patterns" value="Expressed in lymph node and 130 other cell types or tissues"/>
</dbReference>
<dbReference type="ExpressionAtlas" id="Q9NNX6">
    <property type="expression patterns" value="baseline and differential"/>
</dbReference>
<dbReference type="GO" id="GO:0009986">
    <property type="term" value="C:cell surface"/>
    <property type="evidence" value="ECO:0007005"/>
    <property type="project" value="UniProtKB"/>
</dbReference>
<dbReference type="GO" id="GO:0005737">
    <property type="term" value="C:cytoplasm"/>
    <property type="evidence" value="ECO:0000303"/>
    <property type="project" value="UniProtKB"/>
</dbReference>
<dbReference type="GO" id="GO:0009897">
    <property type="term" value="C:external side of plasma membrane"/>
    <property type="evidence" value="ECO:0000314"/>
    <property type="project" value="CAFA"/>
</dbReference>
<dbReference type="GO" id="GO:0005576">
    <property type="term" value="C:extracellular region"/>
    <property type="evidence" value="ECO:0007669"/>
    <property type="project" value="UniProtKB-SubCell"/>
</dbReference>
<dbReference type="GO" id="GO:0043657">
    <property type="term" value="C:host cell"/>
    <property type="evidence" value="ECO:0007669"/>
    <property type="project" value="GOC"/>
</dbReference>
<dbReference type="GO" id="GO:0016020">
    <property type="term" value="C:membrane"/>
    <property type="evidence" value="ECO:0000304"/>
    <property type="project" value="UniProtKB"/>
</dbReference>
<dbReference type="GO" id="GO:0005886">
    <property type="term" value="C:plasma membrane"/>
    <property type="evidence" value="ECO:0000314"/>
    <property type="project" value="UniProtKB"/>
</dbReference>
<dbReference type="GO" id="GO:0030246">
    <property type="term" value="F:carbohydrate binding"/>
    <property type="evidence" value="ECO:0000303"/>
    <property type="project" value="UniProtKB"/>
</dbReference>
<dbReference type="GO" id="GO:0005537">
    <property type="term" value="F:D-mannose binding"/>
    <property type="evidence" value="ECO:0000318"/>
    <property type="project" value="GO_Central"/>
</dbReference>
<dbReference type="GO" id="GO:0046872">
    <property type="term" value="F:metal ion binding"/>
    <property type="evidence" value="ECO:0007669"/>
    <property type="project" value="UniProtKB-KW"/>
</dbReference>
<dbReference type="GO" id="GO:0038187">
    <property type="term" value="F:pattern recognition receptor activity"/>
    <property type="evidence" value="ECO:0000318"/>
    <property type="project" value="GO_Central"/>
</dbReference>
<dbReference type="GO" id="GO:0042605">
    <property type="term" value="F:peptide antigen binding"/>
    <property type="evidence" value="ECO:0000303"/>
    <property type="project" value="UniProtKB"/>
</dbReference>
<dbReference type="GO" id="GO:0046790">
    <property type="term" value="F:virion binding"/>
    <property type="evidence" value="ECO:0000304"/>
    <property type="project" value="UniProtKB"/>
</dbReference>
<dbReference type="GO" id="GO:0001618">
    <property type="term" value="F:virus receptor activity"/>
    <property type="evidence" value="ECO:0000314"/>
    <property type="project" value="FlyBase"/>
</dbReference>
<dbReference type="GO" id="GO:0002250">
    <property type="term" value="P:adaptive immune response"/>
    <property type="evidence" value="ECO:0007669"/>
    <property type="project" value="UniProtKB-KW"/>
</dbReference>
<dbReference type="GO" id="GO:0019882">
    <property type="term" value="P:antigen processing and presentation"/>
    <property type="evidence" value="ECO:0000303"/>
    <property type="project" value="UniProtKB"/>
</dbReference>
<dbReference type="GO" id="GO:0097323">
    <property type="term" value="P:B cell adhesion"/>
    <property type="evidence" value="ECO:0000314"/>
    <property type="project" value="UniProtKB"/>
</dbReference>
<dbReference type="GO" id="GO:0009988">
    <property type="term" value="P:cell-cell recognition"/>
    <property type="evidence" value="ECO:0000304"/>
    <property type="project" value="UniProtKB"/>
</dbReference>
<dbReference type="GO" id="GO:0006897">
    <property type="term" value="P:endocytosis"/>
    <property type="evidence" value="ECO:0007669"/>
    <property type="project" value="UniProtKB-KW"/>
</dbReference>
<dbReference type="GO" id="GO:0007157">
    <property type="term" value="P:heterophilic cell-cell adhesion via plasma membrane cell adhesion molecules"/>
    <property type="evidence" value="ECO:0000304"/>
    <property type="project" value="UniProtKB"/>
</dbReference>
<dbReference type="GO" id="GO:0006955">
    <property type="term" value="P:immune response"/>
    <property type="evidence" value="ECO:0000318"/>
    <property type="project" value="GO_Central"/>
</dbReference>
<dbReference type="GO" id="GO:0045087">
    <property type="term" value="P:innate immune response"/>
    <property type="evidence" value="ECO:0007669"/>
    <property type="project" value="UniProtKB-KW"/>
</dbReference>
<dbReference type="GO" id="GO:0035556">
    <property type="term" value="P:intracellular signal transduction"/>
    <property type="evidence" value="ECO:0000303"/>
    <property type="project" value="UniProtKB"/>
</dbReference>
<dbReference type="GO" id="GO:0075733">
    <property type="term" value="P:intracellular transport of virus"/>
    <property type="evidence" value="ECO:0000304"/>
    <property type="project" value="UniProtKB"/>
</dbReference>
<dbReference type="GO" id="GO:0007159">
    <property type="term" value="P:leukocyte cell-cell adhesion"/>
    <property type="evidence" value="ECO:0000303"/>
    <property type="project" value="UniProtKB"/>
</dbReference>
<dbReference type="GO" id="GO:0046968">
    <property type="term" value="P:peptide antigen transport"/>
    <property type="evidence" value="ECO:0000303"/>
    <property type="project" value="UniProtKB"/>
</dbReference>
<dbReference type="GO" id="GO:0042102">
    <property type="term" value="P:positive regulation of T cell proliferation"/>
    <property type="evidence" value="ECO:0000314"/>
    <property type="project" value="UniProtKB"/>
</dbReference>
<dbReference type="GO" id="GO:1903902">
    <property type="term" value="P:positive regulation of viral life cycle"/>
    <property type="evidence" value="ECO:0000315"/>
    <property type="project" value="FlyBase"/>
</dbReference>
<dbReference type="GO" id="GO:0042129">
    <property type="term" value="P:regulation of T cell proliferation"/>
    <property type="evidence" value="ECO:0000314"/>
    <property type="project" value="MGI"/>
</dbReference>
<dbReference type="GO" id="GO:0046718">
    <property type="term" value="P:symbiont entry into host cell"/>
    <property type="evidence" value="ECO:0000314"/>
    <property type="project" value="FlyBase"/>
</dbReference>
<dbReference type="GO" id="GO:0019079">
    <property type="term" value="P:viral genome replication"/>
    <property type="evidence" value="ECO:0000303"/>
    <property type="project" value="UniProtKB"/>
</dbReference>
<dbReference type="GO" id="GO:0019062">
    <property type="term" value="P:virion attachment to host cell"/>
    <property type="evidence" value="ECO:0000304"/>
    <property type="project" value="UniProtKB"/>
</dbReference>
<dbReference type="CDD" id="cd03590">
    <property type="entry name" value="CLECT_DC-SIGN_like"/>
    <property type="match status" value="1"/>
</dbReference>
<dbReference type="FunFam" id="3.10.100.10:FF:000044">
    <property type="entry name" value="CD209 antigen, isoform CRA_b"/>
    <property type="match status" value="1"/>
</dbReference>
<dbReference type="Gene3D" id="3.10.100.10">
    <property type="entry name" value="Mannose-Binding Protein A, subunit A"/>
    <property type="match status" value="1"/>
</dbReference>
<dbReference type="InterPro" id="IPR001304">
    <property type="entry name" value="C-type_lectin-like"/>
</dbReference>
<dbReference type="InterPro" id="IPR016186">
    <property type="entry name" value="C-type_lectin-like/link_sf"/>
</dbReference>
<dbReference type="InterPro" id="IPR050111">
    <property type="entry name" value="C-type_lectin/snaclec_domain"/>
</dbReference>
<dbReference type="InterPro" id="IPR018378">
    <property type="entry name" value="C-type_lectin_CS"/>
</dbReference>
<dbReference type="InterPro" id="IPR033989">
    <property type="entry name" value="CD209-like_CTLD"/>
</dbReference>
<dbReference type="InterPro" id="IPR016187">
    <property type="entry name" value="CTDL_fold"/>
</dbReference>
<dbReference type="PANTHER" id="PTHR22803">
    <property type="entry name" value="MANNOSE, PHOSPHOLIPASE, LECTIN RECEPTOR RELATED"/>
    <property type="match status" value="1"/>
</dbReference>
<dbReference type="Pfam" id="PF00059">
    <property type="entry name" value="Lectin_C"/>
    <property type="match status" value="1"/>
</dbReference>
<dbReference type="SMART" id="SM00034">
    <property type="entry name" value="CLECT"/>
    <property type="match status" value="1"/>
</dbReference>
<dbReference type="SUPFAM" id="SSF56436">
    <property type="entry name" value="C-type lectin-like"/>
    <property type="match status" value="1"/>
</dbReference>
<dbReference type="PROSITE" id="PS00615">
    <property type="entry name" value="C_TYPE_LECTIN_1"/>
    <property type="match status" value="1"/>
</dbReference>
<dbReference type="PROSITE" id="PS50041">
    <property type="entry name" value="C_TYPE_LECTIN_2"/>
    <property type="match status" value="1"/>
</dbReference>
<feature type="chain" id="PRO_0000046595" description="CD209 antigen">
    <location>
        <begin position="1"/>
        <end position="404"/>
    </location>
</feature>
<feature type="topological domain" description="Cytoplasmic" evidence="37">
    <location>
        <begin position="1"/>
        <end position="37"/>
    </location>
</feature>
<feature type="transmembrane region" description="Helical; Signal-anchor for type II membrane protein" evidence="37">
    <location>
        <begin position="38"/>
        <end position="58"/>
    </location>
</feature>
<feature type="topological domain" description="Extracellular" evidence="37">
    <location>
        <begin position="59"/>
        <end position="404"/>
    </location>
</feature>
<feature type="repeat" description="1">
    <location>
        <begin position="96"/>
        <end position="118"/>
    </location>
</feature>
<feature type="repeat" description="2">
    <location>
        <begin position="119"/>
        <end position="141"/>
    </location>
</feature>
<feature type="repeat" description="3">
    <location>
        <begin position="142"/>
        <end position="164"/>
    </location>
</feature>
<feature type="repeat" description="4">
    <location>
        <begin position="165"/>
        <end position="187"/>
    </location>
</feature>
<feature type="repeat" description="5">
    <location>
        <begin position="188"/>
        <end position="210"/>
    </location>
</feature>
<feature type="repeat" description="6">
    <location>
        <begin position="211"/>
        <end position="233"/>
    </location>
</feature>
<feature type="repeat" description="7">
    <location>
        <begin position="234"/>
        <end position="257"/>
    </location>
</feature>
<feature type="domain" description="C-type lectin" evidence="2">
    <location>
        <begin position="263"/>
        <end position="378"/>
    </location>
</feature>
<feature type="region of interest" description="7 X approximate tandem repeats">
    <location>
        <begin position="96"/>
        <end position="257"/>
    </location>
</feature>
<feature type="short sequence motif" description="Endocytosis signal">
    <location>
        <begin position="14"/>
        <end position="15"/>
    </location>
</feature>
<feature type="short sequence motif" description="Endocytosis signal" evidence="1">
    <location>
        <begin position="16"/>
        <end position="18"/>
    </location>
</feature>
<feature type="short sequence motif" description="Endocytosis signal" evidence="1">
    <location>
        <begin position="31"/>
        <end position="34"/>
    </location>
</feature>
<feature type="binding site">
    <location>
        <position position="347"/>
    </location>
    <ligand>
        <name>Ca(2+)</name>
        <dbReference type="ChEBI" id="CHEBI:29108"/>
    </ligand>
</feature>
<feature type="binding site">
    <location>
        <position position="349"/>
    </location>
    <ligand>
        <name>Ca(2+)</name>
        <dbReference type="ChEBI" id="CHEBI:29108"/>
    </ligand>
</feature>
<feature type="binding site">
    <location>
        <position position="351"/>
    </location>
    <ligand>
        <name>Ca(2+)</name>
        <dbReference type="ChEBI" id="CHEBI:29108"/>
    </ligand>
</feature>
<feature type="binding site">
    <location>
        <position position="354"/>
    </location>
    <ligand>
        <name>Ca(2+)</name>
        <dbReference type="ChEBI" id="CHEBI:29108"/>
    </ligand>
</feature>
<feature type="binding site">
    <location>
        <position position="365"/>
    </location>
    <ligand>
        <name>Ca(2+)</name>
        <dbReference type="ChEBI" id="CHEBI:29108"/>
    </ligand>
</feature>
<feature type="binding site">
    <location>
        <position position="366"/>
    </location>
    <ligand>
        <name>Ca(2+)</name>
        <dbReference type="ChEBI" id="CHEBI:29108"/>
    </ligand>
</feature>
<feature type="glycosylation site" description="N-linked (GlcNAc...) asparagine" evidence="1">
    <location>
        <position position="80"/>
    </location>
</feature>
<feature type="disulfide bond">
    <location>
        <begin position="256"/>
        <end position="267"/>
    </location>
</feature>
<feature type="disulfide bond">
    <location>
        <begin position="284"/>
        <end position="377"/>
    </location>
</feature>
<feature type="disulfide bond">
    <location>
        <begin position="356"/>
        <end position="369"/>
    </location>
</feature>
<feature type="splice variant" id="VSP_010037" description="In isoform 5, isoform 10, isoform 11 and isoform 12." evidence="35 36">
    <original>MSDSKEPRLQQLGLL</original>
    <variation>MASACPGSDFTSIHS</variation>
    <location>
        <begin position="1"/>
        <end position="15"/>
    </location>
</feature>
<feature type="splice variant" id="VSP_010038" description="In isoform 7 and isoform 8." evidence="35">
    <location>
        <begin position="16"/>
        <end position="59"/>
    </location>
</feature>
<feature type="splice variant" id="VSP_010039" description="In isoform 9." evidence="35">
    <original>GYKSL</original>
    <variation>RNQKC</variation>
    <location>
        <begin position="30"/>
        <end position="34"/>
    </location>
</feature>
<feature type="splice variant" id="VSP_010040" description="In isoform 9." evidence="35">
    <location>
        <begin position="35"/>
        <end position="404"/>
    </location>
</feature>
<feature type="splice variant" id="VSP_010041" description="In isoform 6, isoform 10, isoform 11 and isoform 12." evidence="35 36">
    <location>
        <begin position="36"/>
        <end position="59"/>
    </location>
</feature>
<feature type="splice variant" id="VSP_010042" description="In isoform 4." evidence="35">
    <location>
        <begin position="74"/>
        <end position="309"/>
    </location>
</feature>
<feature type="splice variant" id="VSP_010043" description="In isoform 8." evidence="35">
    <location>
        <begin position="142"/>
        <end position="233"/>
    </location>
</feature>
<feature type="splice variant" id="VSP_010044" description="In isoform 3." evidence="35">
    <location>
        <begin position="158"/>
        <end position="249"/>
    </location>
</feature>
<feature type="splice variant" id="VSP_010047" description="In isoform 11." evidence="35">
    <location>
        <begin position="191"/>
        <end position="236"/>
    </location>
</feature>
<feature type="splice variant" id="VSP_010048" description="In isoform 12." evidence="35">
    <original>NFLQLQSSRSNRFTWMGLSDL</original>
    <variation>LQAVLEQRRAQQRWGGRLRGI</variation>
    <location>
        <begin position="301"/>
        <end position="321"/>
    </location>
</feature>
<feature type="splice variant" id="VSP_010049" description="In isoform 2." evidence="35">
    <location>
        <begin position="301"/>
        <end position="306"/>
    </location>
</feature>
<feature type="splice variant" id="VSP_010050" description="In isoform 12." evidence="35">
    <location>
        <begin position="322"/>
        <end position="404"/>
    </location>
</feature>
<feature type="sequence variant" id="VAR_050104" description="In dbSNP:rs1003686123.">
    <original>E</original>
    <variation>D</variation>
    <location>
        <position position="168"/>
    </location>
</feature>
<feature type="sequence variant" id="VAR_036689" description="In dbSNP:rs11465377.">
    <original>E</original>
    <variation>D</variation>
    <location>
        <position position="214"/>
    </location>
</feature>
<feature type="sequence variant" id="VAR_036690" description="In dbSNP:rs11465380.">
    <original>L</original>
    <variation>V</variation>
    <location>
        <position position="242"/>
    </location>
</feature>
<feature type="sequence variant" id="VAR_050105" description="In dbSNP:rs11465393.">
    <original>A</original>
    <variation>S</variation>
    <location>
        <position position="382"/>
    </location>
</feature>
<feature type="mutagenesis site" description="Loss of antigen internalization by endocytosis." evidence="10">
    <original>LL</original>
    <variation>AA</variation>
    <location>
        <begin position="14"/>
        <end position="15"/>
    </location>
</feature>
<feature type="mutagenesis site" description="Loss of binding to ICAM3 and HIV-1 gp120." evidence="9">
    <original>D</original>
    <variation>A</variation>
    <location>
        <position position="320"/>
    </location>
</feature>
<feature type="mutagenesis site" description="Loss of binding to ICAM3 and HIV-1 gp120." evidence="9">
    <original>E</original>
    <variation>A</variation>
    <location>
        <position position="324"/>
    </location>
</feature>
<feature type="mutagenesis site" description="Loss of binding to ICAM3 and HIV-1 gp120." evidence="9">
    <original>E</original>
    <variation>Q</variation>
    <location>
        <position position="347"/>
    </location>
</feature>
<feature type="mutagenesis site" description="Loss of binding to ICAM3 and HIV-1 gp120." evidence="9">
    <original>N</original>
    <variation>D</variation>
    <location>
        <position position="349"/>
    </location>
</feature>
<feature type="mutagenesis site" description="Loss of binding to ICAM3 and HIV-1 gp120." evidence="9">
    <original>N</original>
    <variation>A</variation>
    <location>
        <position position="350"/>
    </location>
</feature>
<feature type="mutagenesis site" description="Loss of binding to ICAM3 and HIV-1 gp120." evidence="9">
    <original>D</original>
    <variation>A</variation>
    <location>
        <position position="355"/>
    </location>
</feature>
<feature type="mutagenesis site" description="Loss of binding to ICAM3 and HIV-1 gp120." evidence="9">
    <original>N</original>
    <variation>D</variation>
    <location>
        <position position="365"/>
    </location>
</feature>
<feature type="mutagenesis site" description="Loss of binding to ICAM3 and HIV-1 gp120." evidence="9">
    <original>D</original>
    <variation>A</variation>
    <location>
        <position position="366"/>
    </location>
</feature>
<feature type="sequence conflict" description="In Ref. 4; AAK91848." evidence="37" ref="4">
    <original>W</original>
    <variation>Q</variation>
    <location>
        <position position="152"/>
    </location>
</feature>
<feature type="strand" evidence="39">
    <location>
        <begin position="261"/>
        <end position="263"/>
    </location>
</feature>
<feature type="strand" evidence="39">
    <location>
        <begin position="266"/>
        <end position="270"/>
    </location>
</feature>
<feature type="helix" evidence="39">
    <location>
        <begin position="277"/>
        <end position="286"/>
    </location>
</feature>
<feature type="helix" evidence="39">
    <location>
        <begin position="297"/>
        <end position="310"/>
    </location>
</feature>
<feature type="strand" evidence="39">
    <location>
        <begin position="314"/>
        <end position="323"/>
    </location>
</feature>
<feature type="strand" evidence="39">
    <location>
        <begin position="326"/>
        <end position="329"/>
    </location>
</feature>
<feature type="helix" evidence="39">
    <location>
        <begin position="337"/>
        <end position="342"/>
    </location>
</feature>
<feature type="strand" evidence="39">
    <location>
        <begin position="356"/>
        <end position="360"/>
    </location>
</feature>
<feature type="strand" evidence="39">
    <location>
        <begin position="363"/>
        <end position="367"/>
    </location>
</feature>
<feature type="strand" evidence="39">
    <location>
        <begin position="373"/>
        <end position="380"/>
    </location>
</feature>
<feature type="turn" evidence="39">
    <location>
        <begin position="381"/>
        <end position="383"/>
    </location>
</feature>